<protein>
    <recommendedName>
        <fullName>TGF-beta receptor type-1</fullName>
        <shortName>TGFR-1</shortName>
        <ecNumber>2.7.11.30</ecNumber>
    </recommendedName>
    <alternativeName>
        <fullName>Activin A receptor type II-like protein kinase of 53kD</fullName>
    </alternativeName>
    <alternativeName>
        <fullName>Activin receptor-like kinase 5</fullName>
        <shortName>ALK-5</shortName>
        <shortName>ALK5</shortName>
    </alternativeName>
    <alternativeName>
        <fullName>Serine/threonine-protein kinase receptor R4</fullName>
        <shortName>SKR4</shortName>
    </alternativeName>
    <alternativeName>
        <fullName>TGF-beta type I receptor</fullName>
    </alternativeName>
    <alternativeName>
        <fullName>Transforming growth factor-beta receptor type I</fullName>
        <shortName>TGF-beta receptor type I</shortName>
        <shortName>TbetaR-I</shortName>
    </alternativeName>
</protein>
<keyword id="KW-0002">3D-structure</keyword>
<keyword id="KW-0025">Alternative splicing</keyword>
<keyword id="KW-0993">Aortic aneurysm</keyword>
<keyword id="KW-0053">Apoptosis</keyword>
<keyword id="KW-0067">ATP-binding</keyword>
<keyword id="KW-0965">Cell junction</keyword>
<keyword id="KW-1003">Cell membrane</keyword>
<keyword id="KW-0989">Craniosynostosis</keyword>
<keyword id="KW-0221">Differentiation</keyword>
<keyword id="KW-0903">Direct protein sequencing</keyword>
<keyword id="KW-0225">Disease variant</keyword>
<keyword id="KW-1015">Disulfide bond</keyword>
<keyword id="KW-0325">Glycoprotein</keyword>
<keyword id="KW-0341">Growth regulation</keyword>
<keyword id="KW-1017">Isopeptide bond</keyword>
<keyword id="KW-0418">Kinase</keyword>
<keyword id="KW-0460">Magnesium</keyword>
<keyword id="KW-0464">Manganese</keyword>
<keyword id="KW-0472">Membrane</keyword>
<keyword id="KW-0479">Metal-binding</keyword>
<keyword id="KW-0547">Nucleotide-binding</keyword>
<keyword id="KW-0597">Phosphoprotein</keyword>
<keyword id="KW-1267">Proteomics identification</keyword>
<keyword id="KW-0675">Receptor</keyword>
<keyword id="KW-1185">Reference proteome</keyword>
<keyword id="KW-0723">Serine/threonine-protein kinase</keyword>
<keyword id="KW-0732">Signal</keyword>
<keyword id="KW-0796">Tight junction</keyword>
<keyword id="KW-0808">Transferase</keyword>
<keyword id="KW-0812">Transmembrane</keyword>
<keyword id="KW-1133">Transmembrane helix</keyword>
<keyword id="KW-0832">Ubl conjugation</keyword>
<gene>
    <name type="primary">TGFBR1</name>
    <name type="synonym">ALK5</name>
    <name type="synonym">SKR4</name>
</gene>
<name>TGFR1_HUMAN</name>
<reference key="1">
    <citation type="journal article" date="1993" name="Cell">
        <title>Cloning of a TGF beta type I receptor that forms a heteromeric complex with the TGF beta type II receptor.</title>
        <authorList>
            <person name="Franzen P."/>
            <person name="ten Dijke P."/>
            <person name="Ichijo H."/>
            <person name="Yamashita H."/>
            <person name="Schulz P."/>
            <person name="Heldin C.-H."/>
            <person name="Miyazono K."/>
        </authorList>
    </citation>
    <scope>NUCLEOTIDE SEQUENCE [MRNA] (ISOFORM 1)</scope>
</reference>
<reference key="2">
    <citation type="journal article" date="1997" name="Genomics">
        <title>Cloning and genomic organization of the human transforming growth factor-beta type I receptor gene.</title>
        <authorList>
            <person name="Vellucci V.F."/>
            <person name="Reiss M."/>
        </authorList>
    </citation>
    <scope>NUCLEOTIDE SEQUENCE [GENOMIC DNA]</scope>
</reference>
<reference key="3">
    <citation type="submission" date="1997-11" db="EMBL/GenBank/DDBJ databases">
        <title>The genomic structure of the gene encoding the human transforming growth factor beta type I receptor.</title>
        <authorList>
            <person name="Lynch M.A."/>
            <person name="Song H."/>
            <person name="DeGroff V.L."/>
            <person name="Alam K.Y."/>
            <person name="Adams E.M."/>
            <person name="Weghorst C.M."/>
        </authorList>
    </citation>
    <scope>NUCLEOTIDE SEQUENCE [GENOMIC DNA]</scope>
</reference>
<reference key="4">
    <citation type="submission" date="2003-12" db="EMBL/GenBank/DDBJ databases">
        <authorList>
            <consortium name="NIEHS SNPs program"/>
        </authorList>
    </citation>
    <scope>NUCLEOTIDE SEQUENCE [GENOMIC DNA]</scope>
</reference>
<reference key="5">
    <citation type="journal article" date="2004" name="Nature">
        <title>DNA sequence and analysis of human chromosome 9.</title>
        <authorList>
            <person name="Humphray S.J."/>
            <person name="Oliver K."/>
            <person name="Hunt A.R."/>
            <person name="Plumb R.W."/>
            <person name="Loveland J.E."/>
            <person name="Howe K.L."/>
            <person name="Andrews T.D."/>
            <person name="Searle S."/>
            <person name="Hunt S.E."/>
            <person name="Scott C.E."/>
            <person name="Jones M.C."/>
            <person name="Ainscough R."/>
            <person name="Almeida J.P."/>
            <person name="Ambrose K.D."/>
            <person name="Ashwell R.I.S."/>
            <person name="Babbage A.K."/>
            <person name="Babbage S."/>
            <person name="Bagguley C.L."/>
            <person name="Bailey J."/>
            <person name="Banerjee R."/>
            <person name="Barker D.J."/>
            <person name="Barlow K.F."/>
            <person name="Bates K."/>
            <person name="Beasley H."/>
            <person name="Beasley O."/>
            <person name="Bird C.P."/>
            <person name="Bray-Allen S."/>
            <person name="Brown A.J."/>
            <person name="Brown J.Y."/>
            <person name="Burford D."/>
            <person name="Burrill W."/>
            <person name="Burton J."/>
            <person name="Carder C."/>
            <person name="Carter N.P."/>
            <person name="Chapman J.C."/>
            <person name="Chen Y."/>
            <person name="Clarke G."/>
            <person name="Clark S.Y."/>
            <person name="Clee C.M."/>
            <person name="Clegg S."/>
            <person name="Collier R.E."/>
            <person name="Corby N."/>
            <person name="Crosier M."/>
            <person name="Cummings A.T."/>
            <person name="Davies J."/>
            <person name="Dhami P."/>
            <person name="Dunn M."/>
            <person name="Dutta I."/>
            <person name="Dyer L.W."/>
            <person name="Earthrowl M.E."/>
            <person name="Faulkner L."/>
            <person name="Fleming C.J."/>
            <person name="Frankish A."/>
            <person name="Frankland J.A."/>
            <person name="French L."/>
            <person name="Fricker D.G."/>
            <person name="Garner P."/>
            <person name="Garnett J."/>
            <person name="Ghori J."/>
            <person name="Gilbert J.G.R."/>
            <person name="Glison C."/>
            <person name="Grafham D.V."/>
            <person name="Gribble S."/>
            <person name="Griffiths C."/>
            <person name="Griffiths-Jones S."/>
            <person name="Grocock R."/>
            <person name="Guy J."/>
            <person name="Hall R.E."/>
            <person name="Hammond S."/>
            <person name="Harley J.L."/>
            <person name="Harrison E.S.I."/>
            <person name="Hart E.A."/>
            <person name="Heath P.D."/>
            <person name="Henderson C.D."/>
            <person name="Hopkins B.L."/>
            <person name="Howard P.J."/>
            <person name="Howden P.J."/>
            <person name="Huckle E."/>
            <person name="Johnson C."/>
            <person name="Johnson D."/>
            <person name="Joy A.A."/>
            <person name="Kay M."/>
            <person name="Keenan S."/>
            <person name="Kershaw J.K."/>
            <person name="Kimberley A.M."/>
            <person name="King A."/>
            <person name="Knights A."/>
            <person name="Laird G.K."/>
            <person name="Langford C."/>
            <person name="Lawlor S."/>
            <person name="Leongamornlert D.A."/>
            <person name="Leversha M."/>
            <person name="Lloyd C."/>
            <person name="Lloyd D.M."/>
            <person name="Lovell J."/>
            <person name="Martin S."/>
            <person name="Mashreghi-Mohammadi M."/>
            <person name="Matthews L."/>
            <person name="McLaren S."/>
            <person name="McLay K.E."/>
            <person name="McMurray A."/>
            <person name="Milne S."/>
            <person name="Nickerson T."/>
            <person name="Nisbett J."/>
            <person name="Nordsiek G."/>
            <person name="Pearce A.V."/>
            <person name="Peck A.I."/>
            <person name="Porter K.M."/>
            <person name="Pandian R."/>
            <person name="Pelan S."/>
            <person name="Phillimore B."/>
            <person name="Povey S."/>
            <person name="Ramsey Y."/>
            <person name="Rand V."/>
            <person name="Scharfe M."/>
            <person name="Sehra H.K."/>
            <person name="Shownkeen R."/>
            <person name="Sims S.K."/>
            <person name="Skuce C.D."/>
            <person name="Smith M."/>
            <person name="Steward C.A."/>
            <person name="Swarbreck D."/>
            <person name="Sycamore N."/>
            <person name="Tester J."/>
            <person name="Thorpe A."/>
            <person name="Tracey A."/>
            <person name="Tromans A."/>
            <person name="Thomas D.W."/>
            <person name="Wall M."/>
            <person name="Wallis J.M."/>
            <person name="West A.P."/>
            <person name="Whitehead S.L."/>
            <person name="Willey D.L."/>
            <person name="Williams S.A."/>
            <person name="Wilming L."/>
            <person name="Wray P.W."/>
            <person name="Young L."/>
            <person name="Ashurst J.L."/>
            <person name="Coulson A."/>
            <person name="Blocker H."/>
            <person name="Durbin R.M."/>
            <person name="Sulston J.E."/>
            <person name="Hubbard T."/>
            <person name="Jackson M.J."/>
            <person name="Bentley D.R."/>
            <person name="Beck S."/>
            <person name="Rogers J."/>
            <person name="Dunham I."/>
        </authorList>
    </citation>
    <scope>NUCLEOTIDE SEQUENCE [LARGE SCALE GENOMIC DNA]</scope>
</reference>
<reference key="6">
    <citation type="journal article" date="2004" name="Genome Res.">
        <title>The status, quality, and expansion of the NIH full-length cDNA project: the Mammalian Gene Collection (MGC).</title>
        <authorList>
            <consortium name="The MGC Project Team"/>
        </authorList>
    </citation>
    <scope>NUCLEOTIDE SEQUENCE [LARGE SCALE MRNA] (ISOFORM 3)</scope>
    <source>
        <tissue>Placenta</tissue>
    </source>
</reference>
<reference key="7">
    <citation type="journal article" date="1998" name="Cancer Res.">
        <title>Type I transforming growth factor beta receptor maps to 9q22 and exhibits a polymorphism and a rare variant within a polyalanine tract.</title>
        <authorList>
            <person name="Pasche B."/>
            <person name="Luo Y."/>
            <person name="Rao P.H."/>
            <person name="Nimer S.D."/>
            <person name="Dmitrovsky E."/>
            <person name="Caron P."/>
            <person name="Luzzatto L."/>
            <person name="Offit K."/>
            <person name="Cordon-Cardo C."/>
            <person name="Renault B."/>
            <person name="Satagopan J.M."/>
            <person name="Murty V.V."/>
            <person name="Massague J."/>
        </authorList>
    </citation>
    <scope>PROTEIN SEQUENCE OF 34-40</scope>
    <scope>SIGNAL SEQUENCE CLEAVAGE SITE</scope>
    <scope>GLYCOSYLATION</scope>
    <scope>CHARACTERIZATION OF VARIANT TGFBR1*6A ALA-24--26-ALA DEL</scope>
    <scope>VARIANT TGFBR1*10A ALA-26 INS</scope>
</reference>
<reference key="8">
    <citation type="journal article" date="2007" name="BMC Genomics">
        <title>Alternative splicing of TGF-betas and their high-affinity receptors T beta RI, T beta RII and T beta RIII (betaglycan) reveal new variants in human prostatic cells.</title>
        <authorList>
            <person name="Konrad L."/>
            <person name="Scheiber J.A."/>
            <person name="Volck-Badouin E."/>
            <person name="Keilani M.M."/>
            <person name="Laible L."/>
            <person name="Brandt H."/>
            <person name="Schmidt A."/>
            <person name="Aumuller G."/>
            <person name="Hofmann R."/>
        </authorList>
    </citation>
    <scope>NUCLEOTIDE SEQUENCE [MRNA] (ISOFORM 2)</scope>
    <scope>NUCLEOTIDE SEQUENCE [MRNA] OF 61-155 (ISOFORM 1)</scope>
    <scope>ALTERNATIVE SPLICING</scope>
    <source>
        <tissue>Prostate</tissue>
    </source>
</reference>
<reference key="9">
    <citation type="submission" date="2011-03" db="EMBL/GenBank/DDBJ databases">
        <authorList>
            <person name="Konrad L."/>
        </authorList>
    </citation>
    <scope>SEQUENCE REVISION (ISOFORM 1)</scope>
</reference>
<reference key="10">
    <citation type="journal article" date="1995" name="EMBO J.">
        <title>GS domain mutations that constitutively activate T beta R-I, the downstream signaling component in the TGF-beta receptor complex.</title>
        <authorList>
            <person name="Wieser R."/>
            <person name="Wrana J.L."/>
            <person name="Massague J."/>
        </authorList>
    </citation>
    <scope>FUNCTION</scope>
    <scope>PHOSPHORYLATION AT THR-185; THR-186; SER-187; SER-189 AND SER-191 BY TGFBR2</scope>
    <scope>SUBCELLULAR LOCATION</scope>
    <scope>SUBUNIT</scope>
    <scope>MUTAGENESIS OF 185-THR-THR-186; SER-187; SER-189; SER-191; THR-200 AND THR-204</scope>
</reference>
<reference key="11">
    <citation type="journal article" date="1996" name="Cell">
        <title>MADR2 maps to 18q21 and encodes a TGFbeta-regulated MAD-related protein that is functionally mutated in colorectal carcinoma.</title>
        <authorList>
            <person name="Eppert K."/>
            <person name="Scherer S.W."/>
            <person name="Ozcelik H."/>
            <person name="Pirone R."/>
            <person name="Hoodless P."/>
            <person name="Kim H."/>
            <person name="Tsui L.-C."/>
            <person name="Bapat B."/>
            <person name="Gallinger S."/>
            <person name="Andrulis I.L."/>
            <person name="Thomsen G.H."/>
            <person name="Wrana J.L."/>
            <person name="Attisano L."/>
        </authorList>
    </citation>
    <scope>FUNCTION IN PHOSPHORYLATION OF SMAD2</scope>
</reference>
<reference key="12">
    <citation type="journal article" date="1996" name="Cell">
        <title>MADR2 is a substrate of the TGFbeta receptor and its phosphorylation is required for nuclear accumulation and signaling.</title>
        <authorList>
            <person name="Macias-Silva M."/>
            <person name="Abdollah S."/>
            <person name="Hoodless P.A."/>
            <person name="Pirone R."/>
            <person name="Attisano L."/>
            <person name="Wrana J.L."/>
        </authorList>
    </citation>
    <scope>INTERACTION WITH SMAD2</scope>
    <scope>FUNCTION IN PHOSPHORYLATION OF SMAD2</scope>
    <scope>FUNCTION IN TRANSCRIPTION REGULATION</scope>
</reference>
<reference key="13">
    <citation type="journal article" date="1997" name="EMBO J.">
        <title>Mechanism of TGFbeta receptor inhibition by FKBP12.</title>
        <authorList>
            <person name="Chen Y.G."/>
            <person name="Liu F."/>
            <person name="Massague J."/>
        </authorList>
    </citation>
    <scope>INTERACTION WITH FKBP1A</scope>
    <scope>ACTIVITY REGULATION</scope>
    <scope>MUTAGENESIS OF LEU-193 AND PRO-194</scope>
</reference>
<reference key="14">
    <citation type="journal article" date="1997" name="EMBO J.">
        <title>TGF-beta receptor-mediated signalling through Smad2, Smad3 and Smad4.</title>
        <authorList>
            <person name="Nakao A."/>
            <person name="Imamura T."/>
            <person name="Souchelnytskyi S."/>
            <person name="Kawabata M."/>
            <person name="Ishisaki A."/>
            <person name="Oeda E."/>
            <person name="Tamaki K."/>
            <person name="Hanai J."/>
            <person name="Heldin C.H."/>
            <person name="Miyazono K."/>
            <person name="ten Dijke P."/>
        </authorList>
    </citation>
    <scope>INTERACTION WITH SMAD3</scope>
</reference>
<reference key="15">
    <citation type="journal article" date="1997" name="J. Biol. Chem.">
        <title>TbetaRI phosphorylation of Smad2 on Ser465 and Ser467 is required for Smad2-Smad4 complex formation and signaling.</title>
        <authorList>
            <person name="Abdollah S."/>
            <person name="Macias-Silva M."/>
            <person name="Tsukazaki T."/>
            <person name="Hayashi H."/>
            <person name="Attisano L."/>
            <person name="Wrana J.L."/>
        </authorList>
    </citation>
    <scope>INTERACTION WITH SMAD2</scope>
    <scope>FUNCTION IN PHOSPHORYLATION OF SMAD2</scope>
    <scope>FUNCTION IN TRANSCRIPTION REGULATION</scope>
</reference>
<reference key="16">
    <citation type="journal article" date="1998" name="Cell">
        <title>SARA, a FYVE domain protein that recruits Smad2 to the TGFbeta receptor.</title>
        <authorList>
            <person name="Tsukazaki T."/>
            <person name="Chiang T.A."/>
            <person name="Davison A.F."/>
            <person name="Attisano L."/>
            <person name="Wrana J.L."/>
        </authorList>
    </citation>
    <scope>INTERACTION WITH ZFYVE9</scope>
</reference>
<reference key="17">
    <citation type="journal article" date="1998" name="J. Cell Biol.">
        <title>Oligomeric structure of type I and type II transforming growth factor beta receptors: homodimers form in the ER and persist at the plasma membrane.</title>
        <authorList>
            <person name="Gilboa L."/>
            <person name="Wells R.G."/>
            <person name="Lodish H.F."/>
            <person name="Henis Y.I."/>
        </authorList>
    </citation>
    <scope>HOMODIMERIZATION</scope>
    <scope>SUBCELLULAR LOCATION</scope>
</reference>
<reference key="18">
    <citation type="journal article" date="2000" name="Mol. Cell">
        <title>Smad7 binds to Smurf2 to form an E3 ubiquitin ligase that targets the TGF-beta receptor for degradation.</title>
        <authorList>
            <person name="Kavsak P."/>
            <person name="Rasmussen R.K."/>
            <person name="Causing C.G."/>
            <person name="Bonni S."/>
            <person name="Zhu H."/>
            <person name="Thomsen G.H."/>
            <person name="Wrana J.L."/>
        </authorList>
    </citation>
    <scope>INTERACTION WITH SMAD7 AND SMURF2</scope>
    <scope>PROTEASOMAL AND LYSOSOMAL DEGRADATION</scope>
</reference>
<reference key="19">
    <citation type="journal article" date="2001" name="J. Biol. Chem.">
        <title>Smurf1 interacts with transforming growth factor-beta type I receptor through Smad7 and induces receptor degradation.</title>
        <authorList>
            <person name="Ebisawa T."/>
            <person name="Fukuchi M."/>
            <person name="Murakami G."/>
            <person name="Chiba T."/>
            <person name="Tanaka K."/>
            <person name="Imamura T."/>
            <person name="Miyazono K."/>
        </authorList>
    </citation>
    <scope>INTERACTION WITH SMAD7 AND SMURF1</scope>
    <scope>PROTEASOMAL DEGRADATION</scope>
</reference>
<reference key="20">
    <citation type="journal article" date="2003" name="EMBO J.">
        <title>TLP, a novel modulator of TGF-beta signaling, has opposite effects on Smad2- and Smad3-dependent signaling.</title>
        <authorList>
            <person name="Felici A."/>
            <person name="Wurthner J.U."/>
            <person name="Parks W.T."/>
            <person name="Giam L.R."/>
            <person name="Reiss M."/>
            <person name="Karpova T.S."/>
            <person name="McNally J.G."/>
            <person name="Roberts A.B."/>
        </authorList>
    </citation>
    <scope>INTERACTION WITH VPS39</scope>
</reference>
<reference key="21">
    <citation type="journal article" date="2005" name="Biochem. J.">
        <title>NEDD4-2 (neural precursor cell expressed, developmentally down-regulated 4-2) negatively regulates TGF-beta (transforming growth factor-beta) signalling by inducing ubiquitin-mediated degradation of Smad2 and TGF-beta type I receptor.</title>
        <authorList>
            <person name="Kuratomi G."/>
            <person name="Komuro A."/>
            <person name="Goto K."/>
            <person name="Shinozaki M."/>
            <person name="Miyazawa K."/>
            <person name="Miyazono K."/>
            <person name="Imamura T."/>
        </authorList>
    </citation>
    <scope>INTERACTION WITH NEDD4L</scope>
    <scope>UBIQUITINATION</scope>
</reference>
<reference key="22">
    <citation type="journal article" date="2005" name="Science">
        <title>Regulation of the polarity protein Par6 by TGFbeta receptors controls epithelial cell plasticity.</title>
        <authorList>
            <person name="Ozdamar B."/>
            <person name="Bose R."/>
            <person name="Barrios-Rodiles M."/>
            <person name="Wang H.R."/>
            <person name="Zhang Y."/>
            <person name="Wrana J.L."/>
        </authorList>
    </citation>
    <scope>FUNCTION IN EPITHELIAL TO MESENCHYMAL TRANSITION</scope>
    <scope>SUBCELLULAR LOCATION</scope>
    <scope>INTERACTION WITH PARD6A</scope>
    <scope>FUNCTION IN PHOSPHORYLATION OF PARD6A</scope>
</reference>
<reference key="23">
    <citation type="journal article" date="2006" name="FASEB J.">
        <title>Identification of CD109 as part of the TGF-beta receptor system in human keratinocytes.</title>
        <authorList>
            <person name="Finnson K.W."/>
            <person name="Tam B.Y.Y."/>
            <person name="Liu K."/>
            <person name="Marcoux A."/>
            <person name="Lepage P."/>
            <person name="Roy S."/>
            <person name="Bizet A.A."/>
            <person name="Philip A."/>
        </authorList>
    </citation>
    <scope>FUNCTION IN CELLULAR GROWTH INHIBITION</scope>
    <scope>INTERACTION WITH CD109</scope>
</reference>
<reference key="24">
    <citation type="journal article" date="2006" name="Nucleic Acids Res.">
        <title>Potentiation of Smad-mediated transcriptional activation by the RNA-binding protein RBPMS.</title>
        <authorList>
            <person name="Sun Y."/>
            <person name="Ding L."/>
            <person name="Zhang H."/>
            <person name="Han J."/>
            <person name="Yang X."/>
            <person name="Yan J."/>
            <person name="Zhu Y."/>
            <person name="Li J."/>
            <person name="Song H."/>
            <person name="Ye Q."/>
        </authorList>
    </citation>
    <scope>INTERACTION WITH RBPMS</scope>
</reference>
<reference key="25">
    <citation type="journal article" date="2008" name="Nat. Cell Biol.">
        <title>The type I TGF-beta receptor engages TRAF6 to activate TAK1 in a receptor kinase-independent manner.</title>
        <authorList>
            <person name="Sorrentino A."/>
            <person name="Thakur N."/>
            <person name="Grimsby S."/>
            <person name="Marcusson A."/>
            <person name="von Bulow V."/>
            <person name="Schuster N."/>
            <person name="Zhang S."/>
            <person name="Heldin C.H."/>
            <person name="Landstrom M."/>
        </authorList>
    </citation>
    <scope>FUNCTION IN APOPTOSIS</scope>
    <scope>INTERACTION WITH TRAF6 AND MAP3K7</scope>
</reference>
<reference key="26">
    <citation type="journal article" date="1998" name="Annu. Rev. Biochem.">
        <title>TGF-beta signal transduction.</title>
        <authorList>
            <person name="Massague J."/>
        </authorList>
    </citation>
    <scope>REVIEW ON PROCESSES REGULATED BY THE TGF-BETA CYTOKINES</scope>
</reference>
<reference key="27">
    <citation type="journal article" date="2009" name="Mol. Cell. Proteomics">
        <title>Large-scale proteomics analysis of the human kinome.</title>
        <authorList>
            <person name="Oppermann F.S."/>
            <person name="Gnad F."/>
            <person name="Olsen J.V."/>
            <person name="Hornberger R."/>
            <person name="Greff Z."/>
            <person name="Keri G."/>
            <person name="Mann M."/>
            <person name="Daub H."/>
        </authorList>
    </citation>
    <scope>PHOSPHORYLATION [LARGE SCALE ANALYSIS] AT SER-165</scope>
    <scope>IDENTIFICATION BY MASS SPECTROMETRY [LARGE SCALE ANALYSIS]</scope>
</reference>
<reference key="28">
    <citation type="journal article" date="2011" name="Mol. Cell. Biol.">
        <title>TSC-22 promotes transforming growth factor beta-mediated cardiac myofibroblast differentiation by antagonizing Smad7 activity.</title>
        <authorList>
            <person name="Yan X."/>
            <person name="Zhang J."/>
            <person name="Pan L."/>
            <person name="Wang P."/>
            <person name="Xue H."/>
            <person name="Zhang L."/>
            <person name="Gao X."/>
            <person name="Zhao X."/>
            <person name="Ning Y."/>
            <person name="Chen Y.G."/>
        </authorList>
    </citation>
    <scope>IDENTIFICATION IN A COMPLEX WITH TGFBR2 AND TSC22D1</scope>
    <scope>INTERACTION WITH SMAD7</scope>
    <scope>SUBCELLULAR LOCATION</scope>
</reference>
<reference key="29">
    <citation type="journal article" date="2012" name="Nat. Med.">
        <title>USP15 stabilizes TGF-beta receptor I and promotes oncogenesis through the activation of TGF-beta signaling in glioblastoma.</title>
        <authorList>
            <person name="Eichhorn P.J."/>
            <person name="Rodon L."/>
            <person name="Gonzalez-Junca A."/>
            <person name="Dirac A."/>
            <person name="Gili M."/>
            <person name="Martinez-Saez E."/>
            <person name="Aura C."/>
            <person name="Barba I."/>
            <person name="Peg V."/>
            <person name="Prat A."/>
            <person name="Cuartas I."/>
            <person name="Jimenez J."/>
            <person name="Garcia-Dorado D."/>
            <person name="Sahuquillo J."/>
            <person name="Bernards R."/>
            <person name="Baselga J."/>
            <person name="Seoane J."/>
        </authorList>
    </citation>
    <scope>UBIQUITINATION</scope>
    <scope>DEUBIQUITINATION BY USP15</scope>
</reference>
<reference key="30">
    <citation type="journal article" date="2016" name="Oncogene">
        <title>Syntenin regulates TGF-beta1-induced Smad activation and the epithelial-to-mesenchymal transition by inhibiting caveolin-mediated TGF-beta type I receptor internalization.</title>
        <authorList>
            <person name="Hwangbo C."/>
            <person name="Tae N."/>
            <person name="Lee S."/>
            <person name="Kim O."/>
            <person name="Park O.K."/>
            <person name="Kim J."/>
            <person name="Kwon S.H."/>
            <person name="Lee J.H."/>
        </authorList>
    </citation>
    <scope>INTERACTION WITH SDCBP AND CAV1</scope>
    <scope>SUBCELLULAR LOCATION</scope>
    <scope>TISSUE SPECIFICITY</scope>
    <scope>UBIQUITINATION</scope>
    <scope>PROTEASOMAL DEGRADATION</scope>
</reference>
<reference key="31">
    <citation type="journal article" date="2016" name="Oncotarget">
        <title>APPL proteins promote TGFbeta-induced nuclear transport of the TGFbeta type I receptor intracellular domain.</title>
        <authorList>
            <person name="Song J."/>
            <person name="Mu Y."/>
            <person name="Li C."/>
            <person name="Bergh A."/>
            <person name="Miaczynska M."/>
            <person name="Heldin C.H."/>
            <person name="Landstroem M."/>
        </authorList>
    </citation>
    <scope>INTERACTION WITH APPL1</scope>
</reference>
<reference key="32">
    <citation type="journal article" date="2018" name="Nat. Commun.">
        <title>The orphan GPR50 receptor promotes constitutive TGFbeta receptor signaling and protects against cancer development.</title>
        <authorList>
            <person name="Wojciech S."/>
            <person name="Ahmad R."/>
            <person name="Belaid-Choucair Z."/>
            <person name="Journe A.S."/>
            <person name="Gallet S."/>
            <person name="Dam J."/>
            <person name="Daulat A."/>
            <person name="Ndiaye-Lobry D."/>
            <person name="Lahuna O."/>
            <person name="Karamitri A."/>
            <person name="Guillaume J.L."/>
            <person name="Do Cruzeiro M."/>
            <person name="Guillonneau F."/>
            <person name="Saade A."/>
            <person name="Clement N."/>
            <person name="Courivaud T."/>
            <person name="Kaabi N."/>
            <person name="Tadagaki K."/>
            <person name="Delagrange P."/>
            <person name="Prevot V."/>
            <person name="Hermine O."/>
            <person name="Prunier C."/>
            <person name="Jockers R."/>
        </authorList>
    </citation>
    <scope>INTERACTION WITH GPR50</scope>
</reference>
<reference key="33">
    <citation type="journal article" date="2021" name="J. Exp. Med.">
        <title>BFAR coordinates TGFbeta signaling to modulate Th9-mediated cancer immunotherapy.</title>
        <authorList>
            <person name="Pei S."/>
            <person name="Huang M."/>
            <person name="Huang J."/>
            <person name="Zhu X."/>
            <person name="Wang H."/>
            <person name="Romano S."/>
            <person name="Deng X."/>
            <person name="Wang Y."/>
            <person name="Luo Y."/>
            <person name="Hao S."/>
            <person name="Xu J."/>
            <person name="Yu T."/>
            <person name="Zhu Q."/>
            <person name="Yuan J."/>
            <person name="Shen K."/>
            <person name="Liu Z."/>
            <person name="Hu G."/>
            <person name="Peng C."/>
            <person name="Luo Q."/>
            <person name="Wen Z."/>
            <person name="Dai D."/>
            <person name="Xiao Y."/>
        </authorList>
    </citation>
    <scope>FUNCTION</scope>
    <scope>UBIQUITINATION AT LYS-268</scope>
    <scope>MUTAGENESIS OF LYS-268</scope>
</reference>
<reference key="34">
    <citation type="journal article" date="1995" name="FEBS Lett.">
        <title>Extracellular domain of type I receptor for transforming growth factor-beta: molecular modelling using protectin (CD59) as a template.</title>
        <authorList>
            <person name="Jokiranta T.S."/>
            <person name="Tissari J."/>
            <person name="Teleman O."/>
            <person name="Meri S."/>
        </authorList>
    </citation>
    <scope>3D-STRUCTURE MODELING OF 34-114</scope>
</reference>
<reference key="35">
    <citation type="journal article" date="1999" name="Cell">
        <title>Crystal structure of the cytoplasmic domain of the type I TGF beta receptor in complex with FKBP12.</title>
        <authorList>
            <person name="Huse M."/>
            <person name="Chen Y.-G."/>
            <person name="Massague J."/>
            <person name="Kuriyan J."/>
        </authorList>
    </citation>
    <scope>X-RAY CRYSTALLOGRAPHY (2.6 ANGSTROMS) OF 162-503 IN COMPLEX WITH FKBP1A</scope>
</reference>
<reference key="36">
    <citation type="journal article" date="2001" name="Mol. Cell">
        <title>The TGF beta receptor activation process: an inhibitor- to substrate-binding switch.</title>
        <authorList>
            <person name="Huse M."/>
            <person name="Muir T.W."/>
            <person name="Xu L."/>
            <person name="Chen Y.-G."/>
            <person name="Kuriyan J."/>
            <person name="Massague J."/>
        </authorList>
    </citation>
    <scope>X-RAY CRYSTALLOGRAPHY (2.9 ANGSTROMS) OF 162-503</scope>
    <scope>PHOSPHORYLATION</scope>
    <scope>INTERACTION WITH SMAD2 AND FKBP1A</scope>
</reference>
<reference key="37">
    <citation type="journal article" date="2004" name="Bioorg. Med. Chem. Lett.">
        <title>Synthesis and activity of new aryl- and heteroaryl-substituted 5,6-dihydro-4H-pyrrolo[1,2-b]pyrazole inhibitors of the transforming growth factor-beta type I receptor kinase domain.</title>
        <authorList>
            <person name="Sawyer J.S."/>
            <person name="Beight D.W."/>
            <person name="Britt K.S."/>
            <person name="Anderson B.D."/>
            <person name="Campbell R.M."/>
            <person name="Goodson T. Jr."/>
            <person name="Herron D.K."/>
            <person name="Li H.-Y."/>
            <person name="McMillen W.T."/>
            <person name="Mort N."/>
            <person name="Parsons S."/>
            <person name="Smith E.C.R."/>
            <person name="Wagner J.R."/>
            <person name="Yan L."/>
            <person name="Zhang F."/>
            <person name="Yingling J.M."/>
        </authorList>
    </citation>
    <scope>X-RAY CRYSTALLOGRAPHY (2.3 ANGSTROMS) OF 175-500 IN COMPLEX WITH SYNTHETIC INHIBITOR</scope>
</reference>
<reference key="38">
    <citation type="journal article" date="2004" name="J. Med. Chem.">
        <title>Identification of 1,5-naphthyridine derivatives as a novel series of potent and selective TGF-beta type I receptor inhibitors.</title>
        <authorList>
            <person name="Gellibert F."/>
            <person name="Woolven J."/>
            <person name="Fouchet M.-H."/>
            <person name="Mathews N."/>
            <person name="Goodland H."/>
            <person name="Lovegrove V."/>
            <person name="Laroze A."/>
            <person name="Nguyen V.-L."/>
            <person name="Sautet S."/>
            <person name="Wang R."/>
            <person name="Janson C."/>
            <person name="Smith W."/>
            <person name="Krysa G."/>
            <person name="Boullay V."/>
            <person name="De Gouville A.-C."/>
            <person name="Huet S."/>
            <person name="Hartley D."/>
        </authorList>
    </citation>
    <scope>X-RAY CRYSTALLOGRAPHY (2.0 ANGSTROMS) OF 201-503 IN COMPLEX WITH SYNTHETIC INHIBITOR</scope>
</reference>
<reference key="39">
    <citation type="journal article" date="2008" name="Mol. Cell">
        <title>Cooperative assembly of TGF-beta superfamily signaling complexes is mediated by two disparate mechanisms and distinct modes of receptor binding.</title>
        <authorList>
            <person name="Groppe J."/>
            <person name="Hinck C.S."/>
            <person name="Samavarchi-Tehrani P."/>
            <person name="Zubieta C."/>
            <person name="Schuermann J.P."/>
            <person name="Taylor A.B."/>
            <person name="Schwarz P.M."/>
            <person name="Wrana J.L."/>
            <person name="Hinck A.P."/>
        </authorList>
    </citation>
    <scope>X-RAY CRYSTALLOGRAPHY (3.00 ANGSTROMS) OF 33-111 IN COMPLEX WITH TGFBR2 AND TGFB3</scope>
    <scope>DISULFIDE BONDS</scope>
</reference>
<reference key="40">
    <citation type="journal article" date="2010" name="J. Biol. Chem.">
        <title>Ternary complex of transforming growth factor-beta1 reveals isoform-specific ligand recognition and receptor recruitment in the superfamily.</title>
        <authorList>
            <person name="Radaev S."/>
            <person name="Zou Z."/>
            <person name="Huang T."/>
            <person name="Lafer E.M."/>
            <person name="Hinck A.P."/>
            <person name="Sun P.D."/>
        </authorList>
    </citation>
    <scope>X-RAY CRYSTALLOGRAPHY (3.00 ANGSTROMS) OF 31-115 IN COMPLEX WITH TGFBR2 AND TGFB1</scope>
    <scope>RECEPTOR AFFINITY FOR LIGANDS</scope>
    <scope>DISULFIDE BONDS</scope>
</reference>
<reference key="41">
    <citation type="journal article" date="2003" name="J. Clin. Oncol.">
        <title>TGFBR1*6A and cancer risk: a meta-analysis of seven case-control studies.</title>
        <authorList>
            <person name="Kaklamani V.G."/>
            <person name="Hou N."/>
            <person name="Bian Y."/>
            <person name="Reich J."/>
            <person name="Offit K."/>
            <person name="Michel L.S."/>
            <person name="Rubinstein W.S."/>
            <person name="Rademaker A."/>
            <person name="Pasche B."/>
        </authorList>
    </citation>
    <scope>ANALYSIS OF VARIANT TGFBR1*6A ALA-24--26-ALA DEL IN CANCER RISK</scope>
</reference>
<reference key="42">
    <citation type="journal article" date="2004" name="BMC Genet.">
        <title>No major association between TGFBR1*6A and prostate cancer.</title>
        <authorList>
            <person name="Kaklamani V.G."/>
            <person name="Baddi L."/>
            <person name="Rosman D."/>
            <person name="Liu J."/>
            <person name="Ellis N."/>
            <person name="Oddoux C."/>
            <person name="Ostrer H."/>
            <person name="Chen Y."/>
            <person name="Ahsan H."/>
            <person name="Offit K."/>
            <person name="Pasche B."/>
        </authorList>
    </citation>
    <scope>ANALYSIS OF VARIANT TGFBR1*6A ALA-24--26-ALA DEL IN PROSTATE CANCER</scope>
</reference>
<reference key="43">
    <citation type="journal article" date="2005" name="Nat. Genet.">
        <title>A syndrome of altered cardiovascular, craniofacial, neurocognitive and skeletal development caused by mutations in TGFBR1 or TGFBR2.</title>
        <authorList>
            <person name="Loeys B.L."/>
            <person name="Chen J."/>
            <person name="Neptune E.R."/>
            <person name="Judge D.P."/>
            <person name="Podowski M."/>
            <person name="Holm T."/>
            <person name="Meyers J."/>
            <person name="Leitch C.C."/>
            <person name="Katsanis N."/>
            <person name="Sharifi N."/>
            <person name="Xu F.L."/>
            <person name="Myers L.A."/>
            <person name="Spevak P.J."/>
            <person name="Cameron D.E."/>
            <person name="De Backer J.F."/>
            <person name="Hellemans J."/>
            <person name="Chen Y."/>
            <person name="Davis E.C."/>
            <person name="Webb C.L."/>
            <person name="Kress W."/>
            <person name="Coucke P.J."/>
            <person name="Rifkin D.B."/>
            <person name="De Paepe A.M."/>
            <person name="Dietz H.C."/>
        </authorList>
    </citation>
    <scope>VARIANTS LDS1 ILE-200; ARG-318; GLY-400 AND PRO-487</scope>
</reference>
<reference key="44">
    <citation type="journal article" date="2005" name="Prostate Cancer Prostatic Dis.">
        <title>TGFBR1(*)6A is not associated with prostate cancer in men of European ancestry.</title>
        <authorList>
            <person name="Suarez B.K."/>
            <person name="Pal P."/>
            <person name="Jin C.H."/>
            <person name="Kaushal R."/>
            <person name="Sun G."/>
            <person name="Jin L."/>
            <person name="Pasche B."/>
            <person name="Deka R."/>
            <person name="Catalona W.J."/>
        </authorList>
    </citation>
    <scope>ANALYSIS OF VARIANT TGFBR1*6A ALA-24--26-ALA DEL IN PROSTATE CANCER</scope>
</reference>
<reference key="45">
    <citation type="journal article" date="2006" name="Am. J. Med. Genet. A">
        <title>FBN1, TGFBR1, and the Marfan-craniosynostosis/mental retardation disorders revisited.</title>
        <authorList>
            <person name="Ades L.C."/>
            <person name="Sullivan K."/>
            <person name="Biggin A."/>
            <person name="Haan E.A."/>
            <person name="Brett M."/>
            <person name="Holman K.J."/>
            <person name="Dixon J."/>
            <person name="Robertson S."/>
            <person name="Holmes A.D."/>
            <person name="Rogers J."/>
            <person name="Bennetts B."/>
        </authorList>
    </citation>
    <scope>VARIANT LDS1 LEU-241</scope>
</reference>
<reference key="46">
    <citation type="journal article" date="2006" name="Hum. Mutat.">
        <title>Identification and in silico analyses of novel TGFBR1 and TGFBR2 mutations in Marfan syndrome-related disorders.</title>
        <authorList>
            <person name="Matyas G."/>
            <person name="Arnold E."/>
            <person name="Carrel T."/>
            <person name="Baumgartner D."/>
            <person name="Boileau C."/>
            <person name="Berger W."/>
            <person name="Steinmann B."/>
        </authorList>
    </citation>
    <scope>VARIANTS LDS1 LEU-241 AND GLN-487</scope>
    <scope>VARIANT HIS-267</scope>
</reference>
<reference key="47">
    <citation type="journal article" date="2006" name="N. Engl. J. Med.">
        <title>Aneurysm syndromes caused by mutations in the TGF-beta receptor.</title>
        <authorList>
            <person name="Loeys B.L."/>
            <person name="Schwarze U."/>
            <person name="Holm T."/>
            <person name="Callewaert B.L."/>
            <person name="Thomas G.H."/>
            <person name="Pannu H."/>
            <person name="De Backer J.F."/>
            <person name="Oswald G.L."/>
            <person name="Symoens S."/>
            <person name="Manouvrier S."/>
            <person name="Roberts A.E."/>
            <person name="Faravelli F."/>
            <person name="Greco M.A."/>
            <person name="Pyeritz R.E."/>
            <person name="Milewicz D.M."/>
            <person name="Coucke P.J."/>
            <person name="Cameron D.E."/>
            <person name="Braverman A.C."/>
            <person name="Byers P.H."/>
            <person name="De Paepe A.M."/>
            <person name="Dietz H.C."/>
        </authorList>
    </citation>
    <scope>VARIANTS LDS1 GLU-232; TRP-487; PRO-487 AND GLN-487</scope>
</reference>
<reference key="48">
    <citation type="journal article" date="2007" name="Nature">
        <title>Patterns of somatic mutation in human cancer genomes.</title>
        <authorList>
            <person name="Greenman C."/>
            <person name="Stephens P."/>
            <person name="Smith R."/>
            <person name="Dalgliesh G.L."/>
            <person name="Hunter C."/>
            <person name="Bignell G."/>
            <person name="Davies H."/>
            <person name="Teague J."/>
            <person name="Butler A."/>
            <person name="Stevens C."/>
            <person name="Edkins S."/>
            <person name="O'Meara S."/>
            <person name="Vastrik I."/>
            <person name="Schmidt E.E."/>
            <person name="Avis T."/>
            <person name="Barthorpe S."/>
            <person name="Bhamra G."/>
            <person name="Buck G."/>
            <person name="Choudhury B."/>
            <person name="Clements J."/>
            <person name="Cole J."/>
            <person name="Dicks E."/>
            <person name="Forbes S."/>
            <person name="Gray K."/>
            <person name="Halliday K."/>
            <person name="Harrison R."/>
            <person name="Hills K."/>
            <person name="Hinton J."/>
            <person name="Jenkinson A."/>
            <person name="Jones D."/>
            <person name="Menzies A."/>
            <person name="Mironenko T."/>
            <person name="Perry J."/>
            <person name="Raine K."/>
            <person name="Richardson D."/>
            <person name="Shepherd R."/>
            <person name="Small A."/>
            <person name="Tofts C."/>
            <person name="Varian J."/>
            <person name="Webb T."/>
            <person name="West S."/>
            <person name="Widaa S."/>
            <person name="Yates A."/>
            <person name="Cahill D.P."/>
            <person name="Louis D.N."/>
            <person name="Goldstraw P."/>
            <person name="Nicholson A.G."/>
            <person name="Brasseur F."/>
            <person name="Looijenga L."/>
            <person name="Weber B.L."/>
            <person name="Chiew Y.-E."/>
            <person name="DeFazio A."/>
            <person name="Greaves M.F."/>
            <person name="Green A.R."/>
            <person name="Campbell P."/>
            <person name="Birney E."/>
            <person name="Easton D.F."/>
            <person name="Chenevix-Trench G."/>
            <person name="Tan M.-H."/>
            <person name="Khoo S.K."/>
            <person name="Teh B.T."/>
            <person name="Yuen S.T."/>
            <person name="Leung S.Y."/>
            <person name="Wooster R."/>
            <person name="Futreal P.A."/>
            <person name="Stratton M.R."/>
        </authorList>
    </citation>
    <scope>VARIANTS [LARGE SCALE ANALYSIS] ILE-153 AND CYS-291</scope>
</reference>
<reference key="49">
    <citation type="journal article" date="2008" name="Nature">
        <title>DNA sequencing of a cytogenetically normal acute myeloid leukaemia genome.</title>
        <authorList>
            <person name="Ley T.J."/>
            <person name="Mardis E.R."/>
            <person name="Ding L."/>
            <person name="Fulton B."/>
            <person name="McLellan M.D."/>
            <person name="Chen K."/>
            <person name="Dooling D."/>
            <person name="Dunford-Shore B.H."/>
            <person name="McGrath S."/>
            <person name="Hickenbotham M."/>
            <person name="Cook L."/>
            <person name="Abbott R."/>
            <person name="Larson D.E."/>
            <person name="Koboldt D.C."/>
            <person name="Pohl C."/>
            <person name="Smith S."/>
            <person name="Hawkins A."/>
            <person name="Abbott S."/>
            <person name="Locke D."/>
            <person name="Hillier L.W."/>
            <person name="Miner T."/>
            <person name="Fulton L."/>
            <person name="Magrini V."/>
            <person name="Wylie T."/>
            <person name="Glasscock J."/>
            <person name="Conyers J."/>
            <person name="Sander N."/>
            <person name="Shi X."/>
            <person name="Osborne J.R."/>
            <person name="Minx P."/>
            <person name="Gordon D."/>
            <person name="Chinwalla A."/>
            <person name="Zhao Y."/>
            <person name="Ries R.E."/>
            <person name="Payton J.E."/>
            <person name="Westervelt P."/>
            <person name="Tomasson M.H."/>
            <person name="Watson M."/>
            <person name="Baty J."/>
            <person name="Ivanovich J."/>
            <person name="Heath S."/>
            <person name="Shannon W.D."/>
            <person name="Nagarajan R."/>
            <person name="Walter M.J."/>
            <person name="Link D.C."/>
            <person name="Graubert T.A."/>
            <person name="DiPersio J.F."/>
            <person name="Wilson R.K."/>
        </authorList>
    </citation>
    <scope>VARIANT [LARGE SCALE ANALYSIS] VAL-139</scope>
</reference>
<reference key="50">
    <citation type="journal article" date="2009" name="Orphanet J. Rare Dis.">
        <title>Loeys-Dietz syndrome type I and type II: clinical findings and novel mutations in two Italian patients.</title>
        <authorList>
            <person name="Drera B."/>
            <person name="Ritelli M."/>
            <person name="Zoppi N."/>
            <person name="Wischmeijer A."/>
            <person name="Gnoli M."/>
            <person name="Fattori R."/>
            <person name="Calzavara-Pinton P.G."/>
            <person name="Barlati S."/>
            <person name="Colombi M."/>
        </authorList>
    </citation>
    <scope>VARIANT LDS1 GLY-351</scope>
</reference>
<reference key="51">
    <citation type="journal article" date="2012" name="J. Hum. Genet.">
        <title>Clinical features and genetic analysis of Korean patients with Loeys-Dietz syndrome.</title>
        <authorList>
            <person name="Yang J.H."/>
            <person name="Ki C.S."/>
            <person name="Han H."/>
            <person name="Song B.G."/>
            <person name="Jang S.Y."/>
            <person name="Chung T.Y."/>
            <person name="Sung K."/>
            <person name="Lee H.J."/>
            <person name="Kim D.K."/>
        </authorList>
    </citation>
    <scope>VARIANTS LDS1 TYR-266; ARG-375 AND GLN-487</scope>
</reference>
<reference key="52">
    <citation type="journal article" date="2012" name="J. Hum. Genet.">
        <authorList>
            <person name="Yang J.H."/>
            <person name="Ki C.S."/>
            <person name="Han H."/>
            <person name="Song B.G."/>
            <person name="Jang S.Y."/>
            <person name="Chung T.Y."/>
            <person name="Sung K."/>
            <person name="Lee H.J."/>
            <person name="Kim D.K."/>
        </authorList>
    </citation>
    <scope>ERRATUM OF PUBMED:22113417</scope>
</reference>
<reference key="53">
    <citation type="journal article" date="2011" name="Nat. Genet.">
        <title>Multiple self-healing squamous epithelioma is caused by a disease-specific spectrum of mutations in TGFBR1.</title>
        <authorList>
            <person name="Goudie D.R."/>
            <person name="D'Alessandro M."/>
            <person name="Merriman B."/>
            <person name="Lee H."/>
            <person name="Szeverenyi I."/>
            <person name="Avery S."/>
            <person name="O'Connor B.D."/>
            <person name="Nelson S.F."/>
            <person name="Coats S.E."/>
            <person name="Stewart A."/>
            <person name="Christie L."/>
            <person name="Pichert G."/>
            <person name="Friedel J."/>
            <person name="Hayes I."/>
            <person name="Burrows N."/>
            <person name="Whittaker S."/>
            <person name="Gerdes A.M."/>
            <person name="Broesby-Olsen S."/>
            <person name="Ferguson-Smith M.A."/>
            <person name="Verma C."/>
            <person name="Lunny D.P."/>
            <person name="Reversade B."/>
            <person name="Lane E.B."/>
        </authorList>
    </citation>
    <scope>VARIANTS MSSE TYR-41; SER-45; ARG-52 AND LEU-83</scope>
</reference>
<feature type="signal peptide" evidence="42">
    <location>
        <begin position="1"/>
        <end position="33"/>
    </location>
</feature>
<feature type="chain" id="PRO_0000024423" description="TGF-beta receptor type-1">
    <location>
        <begin position="34"/>
        <end position="503"/>
    </location>
</feature>
<feature type="topological domain" description="Extracellular" evidence="2">
    <location>
        <begin position="34"/>
        <end position="126"/>
    </location>
</feature>
<feature type="transmembrane region" description="Helical" evidence="2">
    <location>
        <begin position="127"/>
        <end position="147"/>
    </location>
</feature>
<feature type="topological domain" description="Cytoplasmic" evidence="2">
    <location>
        <begin position="148"/>
        <end position="503"/>
    </location>
</feature>
<feature type="domain" description="GS" evidence="4">
    <location>
        <begin position="175"/>
        <end position="204"/>
    </location>
</feature>
<feature type="domain" description="Protein kinase" evidence="3">
    <location>
        <begin position="205"/>
        <end position="495"/>
    </location>
</feature>
<feature type="short sequence motif" description="FKBP1A-binding">
    <location>
        <begin position="193"/>
        <end position="194"/>
    </location>
</feature>
<feature type="active site" description="Proton acceptor" evidence="3 5">
    <location>
        <position position="333"/>
    </location>
</feature>
<feature type="binding site" evidence="3">
    <location>
        <begin position="211"/>
        <end position="219"/>
    </location>
    <ligand>
        <name>ATP</name>
        <dbReference type="ChEBI" id="CHEBI:30616"/>
    </ligand>
</feature>
<feature type="binding site" evidence="3">
    <location>
        <position position="232"/>
    </location>
    <ligand>
        <name>ATP</name>
        <dbReference type="ChEBI" id="CHEBI:30616"/>
    </ligand>
</feature>
<feature type="modified residue" description="Phosphoserine" evidence="47">
    <location>
        <position position="165"/>
    </location>
</feature>
<feature type="modified residue" description="Phosphothreonine; by TGFBR2" evidence="35">
    <location>
        <position position="185"/>
    </location>
</feature>
<feature type="modified residue" description="Phosphothreonine; by TGFBR2" evidence="35">
    <location>
        <position position="186"/>
    </location>
</feature>
<feature type="modified residue" description="Phosphoserine; by TGFBR2" evidence="35">
    <location>
        <position position="187"/>
    </location>
</feature>
<feature type="modified residue" description="Phosphoserine; by TGFBR2" evidence="35">
    <location>
        <position position="189"/>
    </location>
</feature>
<feature type="modified residue" description="Phosphoserine; by TGFBR2" evidence="35">
    <location>
        <position position="191"/>
    </location>
</feature>
<feature type="glycosylation site" description="N-linked (GlcNAc...) asparagine" evidence="2">
    <location>
        <position position="45"/>
    </location>
</feature>
<feature type="disulfide bond" evidence="22 26">
    <location>
        <begin position="36"/>
        <end position="54"/>
    </location>
</feature>
<feature type="disulfide bond" evidence="22 26">
    <location>
        <begin position="38"/>
        <end position="41"/>
    </location>
</feature>
<feature type="disulfide bond" evidence="22 26">
    <location>
        <begin position="48"/>
        <end position="71"/>
    </location>
</feature>
<feature type="disulfide bond" evidence="22 26">
    <location>
        <begin position="86"/>
        <end position="100"/>
    </location>
</feature>
<feature type="disulfide bond" evidence="22 26">
    <location>
        <begin position="101"/>
        <end position="106"/>
    </location>
</feature>
<feature type="cross-link" description="Glycyl lysine isopeptide (Lys-Gly) (interchain with G-Cter in ubiquitin)" evidence="34">
    <location>
        <position position="268"/>
    </location>
</feature>
<feature type="cross-link" description="Glycyl lysine isopeptide (Lys-Gly) (interchain with G-Cter in SUMO)" evidence="1">
    <location>
        <position position="391"/>
    </location>
</feature>
<feature type="splice variant" id="VSP_041326" description="In isoform 2." evidence="45">
    <original>T</original>
    <variation>TGPFS</variation>
    <location>
        <position position="114"/>
    </location>
</feature>
<feature type="splice variant" id="VSP_041327" description="In isoform 3." evidence="44">
    <location>
        <begin position="115"/>
        <end position="191"/>
    </location>
</feature>
<feature type="sequence variant" id="VAR_022342" description="In allele TGFBR1*6A; could be a tumor susceptibility allele.">
    <location>
        <begin position="24"/>
        <end position="26"/>
    </location>
</feature>
<feature type="sequence variant" id="VAR_022343" description="In allele TGFBR1*10A." evidence="42">
    <original>A</original>
    <variation>AA</variation>
    <location>
        <position position="26"/>
    </location>
</feature>
<feature type="sequence variant" id="VAR_065826" description="In MSSE; hypomorphic variant." evidence="27">
    <original>C</original>
    <variation>Y</variation>
    <location>
        <position position="41"/>
    </location>
</feature>
<feature type="sequence variant" id="VAR_065827" description="In MSSE; hypomorphic variant; dbSNP:rs387906696." evidence="27">
    <original>N</original>
    <variation>S</variation>
    <location>
        <position position="45"/>
    </location>
</feature>
<feature type="sequence variant" id="VAR_065828" description="In MSSE; hypomorphic variant; dbSNP:rs587776865." evidence="27">
    <original>G</original>
    <variation>R</variation>
    <location>
        <position position="52"/>
    </location>
</feature>
<feature type="sequence variant" id="VAR_065829" description="In MSSE; hypomorphic variant; dbSNP:rs757374917." evidence="27">
    <original>P</original>
    <variation>L</variation>
    <location>
        <position position="83"/>
    </location>
</feature>
<feature type="sequence variant" id="VAR_054160" description="In dbSNP:rs148176750." evidence="24">
    <original>I</original>
    <variation>V</variation>
    <location>
        <position position="139"/>
    </location>
</feature>
<feature type="sequence variant" id="VAR_041412" description="In dbSNP:rs56014374." evidence="21">
    <original>V</original>
    <variation>I</variation>
    <location>
        <position position="153"/>
    </location>
</feature>
<feature type="sequence variant" id="VAR_022344" description="In LDS1; dbSNP:rs121918712." evidence="14">
    <original>T</original>
    <variation>I</variation>
    <location>
        <position position="200"/>
    </location>
</feature>
<feature type="sequence variant" id="VAR_029481" description="In LDS1." evidence="19">
    <original>K</original>
    <variation>E</variation>
    <location>
        <position position="232"/>
    </location>
</feature>
<feature type="sequence variant" id="VAR_029482" description="In LDS1; dbSNP:rs111854391." evidence="16 18">
    <original>S</original>
    <variation>L</variation>
    <location>
        <position position="241"/>
    </location>
</feature>
<feature type="sequence variant" id="VAR_066720" description="In LDS1." evidence="29">
    <original>D</original>
    <variation>Y</variation>
    <location>
        <position position="266"/>
    </location>
</feature>
<feature type="sequence variant" id="VAR_029483" description="In a patient with Marfan syndrome." evidence="18">
    <original>N</original>
    <variation>H</variation>
    <location>
        <position position="267"/>
    </location>
</feature>
<feature type="sequence variant" id="VAR_041413" description="In dbSNP:rs35974499." evidence="21">
    <original>Y</original>
    <variation>C</variation>
    <location>
        <position position="291"/>
    </location>
</feature>
<feature type="sequence variant" id="VAR_022345" description="In LDS1; dbSNP:rs121918710." evidence="14">
    <original>M</original>
    <variation>R</variation>
    <location>
        <position position="318"/>
    </location>
</feature>
<feature type="sequence variant" id="VAR_066721" description="In LDS1." evidence="25">
    <original>D</original>
    <variation>G</variation>
    <location>
        <position position="351"/>
    </location>
</feature>
<feature type="sequence variant" id="VAR_066722" description="In LDS1; dbSNP:rs1827743139." evidence="29">
    <original>T</original>
    <variation>R</variation>
    <location>
        <position position="375"/>
    </location>
</feature>
<feature type="sequence variant" id="VAR_022346" description="In LDS1; dbSNP:rs121918711." evidence="14">
    <original>D</original>
    <variation>G</variation>
    <location>
        <position position="400"/>
    </location>
</feature>
<feature type="sequence variant" id="VAR_022347" description="In LDS1; dbSNP:rs113605875." evidence="14 19">
    <original>R</original>
    <variation>P</variation>
    <location>
        <position position="487"/>
    </location>
</feature>
<feature type="sequence variant" id="VAR_029484" description="In LDS1; dbSNP:rs113605875." evidence="18 19 29">
    <original>R</original>
    <variation>Q</variation>
    <location>
        <position position="487"/>
    </location>
</feature>
<feature type="sequence variant" id="VAR_029485" description="In LDS1; dbSNP:rs111426349." evidence="19">
    <original>R</original>
    <variation>W</variation>
    <location>
        <position position="487"/>
    </location>
</feature>
<feature type="mutagenesis site" description="Loss of phosphorylation on threonine residues. Loss of threonine phosphorylation, reduced phosphorylation on serine residues and loss of response to TGF-beta; when associated with A-187; A-189 and A-191." evidence="35">
    <original>TT</original>
    <variation>VV</variation>
    <location>
        <begin position="185"/>
        <end position="186"/>
    </location>
</feature>
<feature type="mutagenesis site" description="Loss of threonine phosphorylation, reduced phosphorylation on serine residues and loss of response to TGF-beta; when associated with 185-VV-186; A-189 and A-191." evidence="35">
    <original>S</original>
    <variation>A</variation>
    <location>
        <position position="187"/>
    </location>
</feature>
<feature type="mutagenesis site" description="Loss of threonine phosphorylation, reduced phosphorylation on serine residues and loss of response to TGF-beta; when associated with 185-VV-186; A-187 and A-191." evidence="35">
    <original>S</original>
    <variation>A</variation>
    <location>
        <position position="189"/>
    </location>
</feature>
<feature type="mutagenesis site" description="Loss of threonine phosphorylation, reduced phosphorylation on serine residues and loss of response to TGF-beta; when associated with 185-VV-186; A-187 and A-189." evidence="35">
    <original>S</original>
    <variation>A</variation>
    <location>
        <position position="191"/>
    </location>
</feature>
<feature type="mutagenesis site" description="Loss of interaction with FKBP1A." evidence="38">
    <original>L</original>
    <variation>G</variation>
    <location>
        <position position="193"/>
    </location>
</feature>
<feature type="mutagenesis site" description="Loss of interaction with FKBP1A." evidence="38">
    <original>P</original>
    <variation>K</variation>
    <location>
        <position position="194"/>
    </location>
</feature>
<feature type="mutagenesis site" description="Loss of response to TGF-beta." evidence="35">
    <original>T</original>
    <variation>D</variation>
    <location>
        <position position="200"/>
    </location>
</feature>
<feature type="mutagenesis site" description="Loss of phosphorylation. Loss of response to TGF-beta." evidence="35">
    <original>T</original>
    <variation>V</variation>
    <location>
        <position position="200"/>
    </location>
</feature>
<feature type="mutagenesis site" description="Constitutive activation." evidence="35">
    <original>T</original>
    <variation>D</variation>
    <location>
        <position position="204"/>
    </location>
</feature>
<feature type="mutagenesis site" description="Reduced phosphorylation. Reduced response to TGF-beta." evidence="35">
    <original>T</original>
    <variation>V</variation>
    <location>
        <position position="204"/>
    </location>
</feature>
<feature type="mutagenesis site" description="Abolished its TCR-induced ubiquitination." evidence="34">
    <original>K</original>
    <variation>R</variation>
    <location>
        <position position="268"/>
    </location>
</feature>
<feature type="strand" evidence="55">
    <location>
        <begin position="35"/>
        <end position="37"/>
    </location>
</feature>
<feature type="turn" evidence="55">
    <location>
        <begin position="42"/>
        <end position="46"/>
    </location>
</feature>
<feature type="strand" evidence="55">
    <location>
        <begin position="47"/>
        <end position="49"/>
    </location>
</feature>
<feature type="strand" evidence="55">
    <location>
        <begin position="51"/>
        <end position="63"/>
    </location>
</feature>
<feature type="strand" evidence="55">
    <location>
        <begin position="65"/>
        <end position="72"/>
    </location>
</feature>
<feature type="helix" evidence="55">
    <location>
        <begin position="74"/>
        <end position="76"/>
    </location>
</feature>
<feature type="strand" evidence="55">
    <location>
        <begin position="77"/>
        <end position="79"/>
    </location>
</feature>
<feature type="turn" evidence="51">
    <location>
        <begin position="84"/>
        <end position="86"/>
    </location>
</feature>
<feature type="strand" evidence="55">
    <location>
        <begin position="89"/>
        <end position="91"/>
    </location>
</feature>
<feature type="strand" evidence="55">
    <location>
        <begin position="94"/>
        <end position="101"/>
    </location>
</feature>
<feature type="strand" evidence="51">
    <location>
        <begin position="102"/>
        <end position="105"/>
    </location>
</feature>
<feature type="helix" evidence="49">
    <location>
        <begin position="107"/>
        <end position="109"/>
    </location>
</feature>
<feature type="helix" evidence="48">
    <location>
        <begin position="177"/>
        <end position="183"/>
    </location>
</feature>
<feature type="strand" evidence="50">
    <location>
        <begin position="187"/>
        <end position="190"/>
    </location>
</feature>
<feature type="strand" evidence="48">
    <location>
        <begin position="191"/>
        <end position="193"/>
    </location>
</feature>
<feature type="helix" evidence="52">
    <location>
        <begin position="202"/>
        <end position="204"/>
    </location>
</feature>
<feature type="strand" evidence="52">
    <location>
        <begin position="205"/>
        <end position="213"/>
    </location>
</feature>
<feature type="strand" evidence="52">
    <location>
        <begin position="215"/>
        <end position="224"/>
    </location>
</feature>
<feature type="strand" evidence="52">
    <location>
        <begin position="227"/>
        <end position="234"/>
    </location>
</feature>
<feature type="helix" evidence="52">
    <location>
        <begin position="236"/>
        <end position="238"/>
    </location>
</feature>
<feature type="helix" evidence="52">
    <location>
        <begin position="239"/>
        <end position="249"/>
    </location>
</feature>
<feature type="strand" evidence="50">
    <location>
        <begin position="251"/>
        <end position="253"/>
    </location>
</feature>
<feature type="strand" evidence="52">
    <location>
        <begin position="262"/>
        <end position="269"/>
    </location>
</feature>
<feature type="strand" evidence="52">
    <location>
        <begin position="271"/>
        <end position="281"/>
    </location>
</feature>
<feature type="helix" evidence="52">
    <location>
        <begin position="288"/>
        <end position="294"/>
    </location>
</feature>
<feature type="helix" evidence="52">
    <location>
        <begin position="299"/>
        <end position="317"/>
    </location>
</feature>
<feature type="strand" evidence="53">
    <location>
        <begin position="322"/>
        <end position="324"/>
    </location>
</feature>
<feature type="strand" evidence="54">
    <location>
        <begin position="328"/>
        <end position="330"/>
    </location>
</feature>
<feature type="helix" evidence="52">
    <location>
        <begin position="336"/>
        <end position="338"/>
    </location>
</feature>
<feature type="strand" evidence="52">
    <location>
        <begin position="339"/>
        <end position="341"/>
    </location>
</feature>
<feature type="strand" evidence="52">
    <location>
        <begin position="347"/>
        <end position="349"/>
    </location>
</feature>
<feature type="helix" evidence="52">
    <location>
        <begin position="352"/>
        <end position="354"/>
    </location>
</feature>
<feature type="strand" evidence="52">
    <location>
        <begin position="356"/>
        <end position="359"/>
    </location>
</feature>
<feature type="turn" evidence="52">
    <location>
        <begin position="360"/>
        <end position="363"/>
    </location>
</feature>
<feature type="strand" evidence="52">
    <location>
        <begin position="364"/>
        <end position="367"/>
    </location>
</feature>
<feature type="strand" evidence="53">
    <location>
        <begin position="368"/>
        <end position="371"/>
    </location>
</feature>
<feature type="helix" evidence="52">
    <location>
        <begin position="376"/>
        <end position="378"/>
    </location>
</feature>
<feature type="helix" evidence="52">
    <location>
        <begin position="381"/>
        <end position="384"/>
    </location>
</feature>
<feature type="helix" evidence="52">
    <location>
        <begin position="393"/>
        <end position="413"/>
    </location>
</feature>
<feature type="strand" evidence="50">
    <location>
        <begin position="417"/>
        <end position="419"/>
    </location>
</feature>
<feature type="turn" evidence="52">
    <location>
        <begin position="427"/>
        <end position="431"/>
    </location>
</feature>
<feature type="helix" evidence="52">
    <location>
        <begin position="438"/>
        <end position="445"/>
    </location>
</feature>
<feature type="helix" evidence="52">
    <location>
        <begin position="456"/>
        <end position="460"/>
    </location>
</feature>
<feature type="helix" evidence="52">
    <location>
        <begin position="462"/>
        <end position="474"/>
    </location>
</feature>
<feature type="helix" evidence="52">
    <location>
        <begin position="479"/>
        <end position="481"/>
    </location>
</feature>
<feature type="helix" evidence="52">
    <location>
        <begin position="485"/>
        <end position="497"/>
    </location>
</feature>
<proteinExistence type="evidence at protein level"/>
<evidence type="ECO:0000250" key="1"/>
<evidence type="ECO:0000255" key="2"/>
<evidence type="ECO:0000255" key="3">
    <source>
        <dbReference type="PROSITE-ProRule" id="PRU00159"/>
    </source>
</evidence>
<evidence type="ECO:0000255" key="4">
    <source>
        <dbReference type="PROSITE-ProRule" id="PRU00585"/>
    </source>
</evidence>
<evidence type="ECO:0000255" key="5">
    <source>
        <dbReference type="PROSITE-ProRule" id="PRU10027"/>
    </source>
</evidence>
<evidence type="ECO:0000269" key="6">
    <source>
    </source>
</evidence>
<evidence type="ECO:0000269" key="7">
    <source>
    </source>
</evidence>
<evidence type="ECO:0000269" key="8">
    <source>
    </source>
</evidence>
<evidence type="ECO:0000269" key="9">
    <source>
    </source>
</evidence>
<evidence type="ECO:0000269" key="10">
    <source>
    </source>
</evidence>
<evidence type="ECO:0000269" key="11">
    <source>
    </source>
</evidence>
<evidence type="ECO:0000269" key="12">
    <source>
    </source>
</evidence>
<evidence type="ECO:0000269" key="13">
    <source>
    </source>
</evidence>
<evidence type="ECO:0000269" key="14">
    <source>
    </source>
</evidence>
<evidence type="ECO:0000269" key="15">
    <source>
    </source>
</evidence>
<evidence type="ECO:0000269" key="16">
    <source>
    </source>
</evidence>
<evidence type="ECO:0000269" key="17">
    <source>
    </source>
</evidence>
<evidence type="ECO:0000269" key="18">
    <source>
    </source>
</evidence>
<evidence type="ECO:0000269" key="19">
    <source>
    </source>
</evidence>
<evidence type="ECO:0000269" key="20">
    <source>
    </source>
</evidence>
<evidence type="ECO:0000269" key="21">
    <source>
    </source>
</evidence>
<evidence type="ECO:0000269" key="22">
    <source>
    </source>
</evidence>
<evidence type="ECO:0000269" key="23">
    <source>
    </source>
</evidence>
<evidence type="ECO:0000269" key="24">
    <source>
    </source>
</evidence>
<evidence type="ECO:0000269" key="25">
    <source>
    </source>
</evidence>
<evidence type="ECO:0000269" key="26">
    <source>
    </source>
</evidence>
<evidence type="ECO:0000269" key="27">
    <source>
    </source>
</evidence>
<evidence type="ECO:0000269" key="28">
    <source>
    </source>
</evidence>
<evidence type="ECO:0000269" key="29">
    <source>
    </source>
</evidence>
<evidence type="ECO:0000269" key="30">
    <source>
    </source>
</evidence>
<evidence type="ECO:0000269" key="31">
    <source>
    </source>
</evidence>
<evidence type="ECO:0000269" key="32">
    <source>
    </source>
</evidence>
<evidence type="ECO:0000269" key="33">
    <source>
    </source>
</evidence>
<evidence type="ECO:0000269" key="34">
    <source>
    </source>
</evidence>
<evidence type="ECO:0000269" key="35">
    <source>
    </source>
</evidence>
<evidence type="ECO:0000269" key="36">
    <source>
    </source>
</evidence>
<evidence type="ECO:0000269" key="37">
    <source>
    </source>
</evidence>
<evidence type="ECO:0000269" key="38">
    <source>
    </source>
</evidence>
<evidence type="ECO:0000269" key="39">
    <source>
    </source>
</evidence>
<evidence type="ECO:0000269" key="40">
    <source>
    </source>
</evidence>
<evidence type="ECO:0000269" key="41">
    <source>
    </source>
</evidence>
<evidence type="ECO:0000269" key="42">
    <source>
    </source>
</evidence>
<evidence type="ECO:0000269" key="43">
    <source>
    </source>
</evidence>
<evidence type="ECO:0000303" key="44">
    <source>
    </source>
</evidence>
<evidence type="ECO:0000303" key="45">
    <source>
    </source>
</evidence>
<evidence type="ECO:0000305" key="46"/>
<evidence type="ECO:0007744" key="47">
    <source>
    </source>
</evidence>
<evidence type="ECO:0007829" key="48">
    <source>
        <dbReference type="PDB" id="1B6C"/>
    </source>
</evidence>
<evidence type="ECO:0007829" key="49">
    <source>
        <dbReference type="PDB" id="2L5S"/>
    </source>
</evidence>
<evidence type="ECO:0007829" key="50">
    <source>
        <dbReference type="PDB" id="3KCF"/>
    </source>
</evidence>
<evidence type="ECO:0007829" key="51">
    <source>
        <dbReference type="PDB" id="3KFD"/>
    </source>
</evidence>
<evidence type="ECO:0007829" key="52">
    <source>
        <dbReference type="PDB" id="5E8S"/>
    </source>
</evidence>
<evidence type="ECO:0007829" key="53">
    <source>
        <dbReference type="PDB" id="5E8X"/>
    </source>
</evidence>
<evidence type="ECO:0007829" key="54">
    <source>
        <dbReference type="PDB" id="5E8Z"/>
    </source>
</evidence>
<evidence type="ECO:0007829" key="55">
    <source>
        <dbReference type="PDB" id="6MAC"/>
    </source>
</evidence>
<organism>
    <name type="scientific">Homo sapiens</name>
    <name type="common">Human</name>
    <dbReference type="NCBI Taxonomy" id="9606"/>
    <lineage>
        <taxon>Eukaryota</taxon>
        <taxon>Metazoa</taxon>
        <taxon>Chordata</taxon>
        <taxon>Craniata</taxon>
        <taxon>Vertebrata</taxon>
        <taxon>Euteleostomi</taxon>
        <taxon>Mammalia</taxon>
        <taxon>Eutheria</taxon>
        <taxon>Euarchontoglires</taxon>
        <taxon>Primates</taxon>
        <taxon>Haplorrhini</taxon>
        <taxon>Catarrhini</taxon>
        <taxon>Hominidae</taxon>
        <taxon>Homo</taxon>
    </lineage>
</organism>
<sequence length="503" mass="55960">MEAAVAAPRPRLLLLVLAAAAAAAAALLPGATALQCFCHLCTKDNFTCVTDGLCFVSVTETTDKVIHNSMCIAEIDLIPRDRPFVCAPSSKTGSVTTTYCCNQDHCNKIELPTTVKSSPGLGPVELAAVIAGPVCFVCISLMLMVYICHNRTVIHHRVPNEEDPSLDRPFISEGTTLKDLIYDMTTSGSGSGLPLLVQRTIARTIVLQESIGKGRFGEVWRGKWRGEEVAVKIFSSREERSWFREAEIYQTVMLRHENILGFIAADNKDNGTWTQLWLVSDYHEHGSLFDYLNRYTVTVEGMIKLALSTASGLAHLHMEIVGTQGKPAIAHRDLKSKNILVKKNGTCCIADLGLAVRHDSATDTIDIAPNHRVGTKRYMAPEVLDDSINMKHFESFKRADIYAMGLVFWEIARRCSIGGIHEDYQLPYYDLVPSDPSVEEMRKVVCEQKLRPNIPNRWQSCEALRVMAKIMRECWYANGAARLTALRIKKTLSQLSQQEGIKM</sequence>
<dbReference type="EC" id="2.7.11.30"/>
<dbReference type="EMBL" id="L11695">
    <property type="protein sequence ID" value="AAA16073.1"/>
    <property type="molecule type" value="mRNA"/>
</dbReference>
<dbReference type="EMBL" id="AF054598">
    <property type="protein sequence ID" value="AAC08998.1"/>
    <property type="molecule type" value="Genomic_DNA"/>
</dbReference>
<dbReference type="EMBL" id="AF054590">
    <property type="protein sequence ID" value="AAC08998.1"/>
    <property type="status" value="JOINED"/>
    <property type="molecule type" value="Genomic_DNA"/>
</dbReference>
<dbReference type="EMBL" id="AF054591">
    <property type="protein sequence ID" value="AAC08998.1"/>
    <property type="status" value="JOINED"/>
    <property type="molecule type" value="Genomic_DNA"/>
</dbReference>
<dbReference type="EMBL" id="AF054592">
    <property type="protein sequence ID" value="AAC08998.1"/>
    <property type="status" value="JOINED"/>
    <property type="molecule type" value="Genomic_DNA"/>
</dbReference>
<dbReference type="EMBL" id="AF054593">
    <property type="protein sequence ID" value="AAC08998.1"/>
    <property type="status" value="JOINED"/>
    <property type="molecule type" value="Genomic_DNA"/>
</dbReference>
<dbReference type="EMBL" id="AF054594">
    <property type="protein sequence ID" value="AAC08998.1"/>
    <property type="status" value="JOINED"/>
    <property type="molecule type" value="Genomic_DNA"/>
</dbReference>
<dbReference type="EMBL" id="AF054595">
    <property type="protein sequence ID" value="AAC08998.1"/>
    <property type="status" value="JOINED"/>
    <property type="molecule type" value="Genomic_DNA"/>
</dbReference>
<dbReference type="EMBL" id="AF054596">
    <property type="protein sequence ID" value="AAC08998.1"/>
    <property type="status" value="JOINED"/>
    <property type="molecule type" value="Genomic_DNA"/>
</dbReference>
<dbReference type="EMBL" id="AF054597">
    <property type="protein sequence ID" value="AAC08998.1"/>
    <property type="status" value="JOINED"/>
    <property type="molecule type" value="Genomic_DNA"/>
</dbReference>
<dbReference type="EMBL" id="AF035670">
    <property type="protein sequence ID" value="AAD02042.1"/>
    <property type="molecule type" value="Genomic_DNA"/>
</dbReference>
<dbReference type="EMBL" id="AF035662">
    <property type="protein sequence ID" value="AAD02042.1"/>
    <property type="status" value="JOINED"/>
    <property type="molecule type" value="Genomic_DNA"/>
</dbReference>
<dbReference type="EMBL" id="AF035663">
    <property type="protein sequence ID" value="AAD02042.1"/>
    <property type="status" value="JOINED"/>
    <property type="molecule type" value="Genomic_DNA"/>
</dbReference>
<dbReference type="EMBL" id="AF035664">
    <property type="protein sequence ID" value="AAD02042.1"/>
    <property type="status" value="JOINED"/>
    <property type="molecule type" value="Genomic_DNA"/>
</dbReference>
<dbReference type="EMBL" id="AF035665">
    <property type="protein sequence ID" value="AAD02042.1"/>
    <property type="status" value="JOINED"/>
    <property type="molecule type" value="Genomic_DNA"/>
</dbReference>
<dbReference type="EMBL" id="AF035666">
    <property type="protein sequence ID" value="AAD02042.1"/>
    <property type="status" value="JOINED"/>
    <property type="molecule type" value="Genomic_DNA"/>
</dbReference>
<dbReference type="EMBL" id="AF035667">
    <property type="protein sequence ID" value="AAD02042.1"/>
    <property type="status" value="JOINED"/>
    <property type="molecule type" value="Genomic_DNA"/>
</dbReference>
<dbReference type="EMBL" id="AF035668">
    <property type="protein sequence ID" value="AAD02042.1"/>
    <property type="status" value="JOINED"/>
    <property type="molecule type" value="Genomic_DNA"/>
</dbReference>
<dbReference type="EMBL" id="AF035669">
    <property type="protein sequence ID" value="AAD02042.1"/>
    <property type="status" value="JOINED"/>
    <property type="molecule type" value="Genomic_DNA"/>
</dbReference>
<dbReference type="EMBL" id="AY497473">
    <property type="protein sequence ID" value="AAR32097.1"/>
    <property type="molecule type" value="Genomic_DNA"/>
</dbReference>
<dbReference type="EMBL" id="AL162427">
    <property type="status" value="NOT_ANNOTATED_CDS"/>
    <property type="molecule type" value="Genomic_DNA"/>
</dbReference>
<dbReference type="EMBL" id="BC071181">
    <property type="protein sequence ID" value="AAH71181.1"/>
    <property type="molecule type" value="mRNA"/>
</dbReference>
<dbReference type="EMBL" id="AJ619019">
    <property type="protein sequence ID" value="CAF02096.2"/>
    <property type="molecule type" value="mRNA"/>
</dbReference>
<dbReference type="EMBL" id="AJ619020">
    <property type="protein sequence ID" value="CAF02097.1"/>
    <property type="molecule type" value="mRNA"/>
</dbReference>
<dbReference type="CCDS" id="CCDS47998.1">
    <molecule id="P36897-3"/>
</dbReference>
<dbReference type="CCDS" id="CCDS6738.1">
    <molecule id="P36897-1"/>
</dbReference>
<dbReference type="CCDS" id="CCDS78413.1">
    <molecule id="P36897-2"/>
</dbReference>
<dbReference type="PIR" id="A49432">
    <property type="entry name" value="A49432"/>
</dbReference>
<dbReference type="RefSeq" id="NP_001124388.1">
    <molecule id="P36897-3"/>
    <property type="nucleotide sequence ID" value="NM_001130916.3"/>
</dbReference>
<dbReference type="RefSeq" id="NP_001293139.1">
    <molecule id="P36897-2"/>
    <property type="nucleotide sequence ID" value="NM_001306210.2"/>
</dbReference>
<dbReference type="RefSeq" id="NP_004603.1">
    <molecule id="P36897-1"/>
    <property type="nucleotide sequence ID" value="NM_004612.4"/>
</dbReference>
<dbReference type="PDB" id="1B6C">
    <property type="method" value="X-ray"/>
    <property type="resolution" value="2.60 A"/>
    <property type="chains" value="B/D/F/H=162-503"/>
</dbReference>
<dbReference type="PDB" id="1IAS">
    <property type="method" value="X-ray"/>
    <property type="resolution" value="2.90 A"/>
    <property type="chains" value="A/B/C/D/E=162-503"/>
</dbReference>
<dbReference type="PDB" id="1PY5">
    <property type="method" value="X-ray"/>
    <property type="resolution" value="2.30 A"/>
    <property type="chains" value="A=175-500"/>
</dbReference>
<dbReference type="PDB" id="1RW8">
    <property type="method" value="X-ray"/>
    <property type="resolution" value="2.40 A"/>
    <property type="chains" value="A=200-500"/>
</dbReference>
<dbReference type="PDB" id="1VJY">
    <property type="method" value="X-ray"/>
    <property type="resolution" value="2.00 A"/>
    <property type="chains" value="A=201-503"/>
</dbReference>
<dbReference type="PDB" id="2L5S">
    <property type="method" value="NMR"/>
    <property type="chains" value="A=31-115"/>
</dbReference>
<dbReference type="PDB" id="2PJY">
    <property type="method" value="X-ray"/>
    <property type="resolution" value="3.00 A"/>
    <property type="chains" value="C=33-111"/>
</dbReference>
<dbReference type="PDB" id="2WOT">
    <property type="method" value="X-ray"/>
    <property type="resolution" value="1.85 A"/>
    <property type="chains" value="A=200-503"/>
</dbReference>
<dbReference type="PDB" id="2WOU">
    <property type="method" value="X-ray"/>
    <property type="resolution" value="2.30 A"/>
    <property type="chains" value="A=200-503"/>
</dbReference>
<dbReference type="PDB" id="2X7O">
    <property type="method" value="X-ray"/>
    <property type="resolution" value="3.70 A"/>
    <property type="chains" value="A/B/C/D/E=162-503"/>
</dbReference>
<dbReference type="PDB" id="3FAA">
    <property type="method" value="X-ray"/>
    <property type="resolution" value="3.35 A"/>
    <property type="chains" value="A/B/C/D/E=162-503"/>
</dbReference>
<dbReference type="PDB" id="3GXL">
    <property type="method" value="X-ray"/>
    <property type="resolution" value="1.80 A"/>
    <property type="chains" value="A=201-503"/>
</dbReference>
<dbReference type="PDB" id="3HMM">
    <property type="method" value="X-ray"/>
    <property type="resolution" value="1.70 A"/>
    <property type="chains" value="A=201-503"/>
</dbReference>
<dbReference type="PDB" id="3KCF">
    <property type="method" value="X-ray"/>
    <property type="resolution" value="2.80 A"/>
    <property type="chains" value="A/B/C/D/E=162-503"/>
</dbReference>
<dbReference type="PDB" id="3KFD">
    <property type="method" value="X-ray"/>
    <property type="resolution" value="3.00 A"/>
    <property type="chains" value="I/J/K/L=31-115"/>
</dbReference>
<dbReference type="PDB" id="3TZM">
    <property type="method" value="X-ray"/>
    <property type="resolution" value="1.70 A"/>
    <property type="chains" value="A=200-503"/>
</dbReference>
<dbReference type="PDB" id="4X0M">
    <property type="method" value="X-ray"/>
    <property type="resolution" value="1.68 A"/>
    <property type="chains" value="A=200-503"/>
</dbReference>
<dbReference type="PDB" id="4X2F">
    <property type="method" value="X-ray"/>
    <property type="resolution" value="1.49 A"/>
    <property type="chains" value="A=200-503"/>
</dbReference>
<dbReference type="PDB" id="4X2G">
    <property type="method" value="X-ray"/>
    <property type="resolution" value="1.51 A"/>
    <property type="chains" value="A=200-503"/>
</dbReference>
<dbReference type="PDB" id="4X2J">
    <property type="method" value="X-ray"/>
    <property type="resolution" value="1.69 A"/>
    <property type="chains" value="A=200-503"/>
</dbReference>
<dbReference type="PDB" id="4X2K">
    <property type="method" value="X-ray"/>
    <property type="resolution" value="1.69 A"/>
    <property type="chains" value="A=200-503"/>
</dbReference>
<dbReference type="PDB" id="4X2N">
    <property type="method" value="X-ray"/>
    <property type="resolution" value="1.80 A"/>
    <property type="chains" value="A=200-503"/>
</dbReference>
<dbReference type="PDB" id="5E8S">
    <property type="method" value="X-ray"/>
    <property type="resolution" value="1.45 A"/>
    <property type="chains" value="A=200-503"/>
</dbReference>
<dbReference type="PDB" id="5E8T">
    <property type="method" value="X-ray"/>
    <property type="resolution" value="1.70 A"/>
    <property type="chains" value="A=200-503"/>
</dbReference>
<dbReference type="PDB" id="5E8U">
    <property type="method" value="X-ray"/>
    <property type="resolution" value="2.03 A"/>
    <property type="chains" value="A=200-503"/>
</dbReference>
<dbReference type="PDB" id="5E8W">
    <property type="method" value="X-ray"/>
    <property type="resolution" value="1.86 A"/>
    <property type="chains" value="A=200-503"/>
</dbReference>
<dbReference type="PDB" id="5E8X">
    <property type="method" value="X-ray"/>
    <property type="resolution" value="1.45 A"/>
    <property type="chains" value="A=200-503"/>
</dbReference>
<dbReference type="PDB" id="5E8Z">
    <property type="method" value="X-ray"/>
    <property type="resolution" value="1.51 A"/>
    <property type="chains" value="A=200-503"/>
</dbReference>
<dbReference type="PDB" id="5E90">
    <property type="method" value="X-ray"/>
    <property type="resolution" value="2.05 A"/>
    <property type="chains" value="A=200-503"/>
</dbReference>
<dbReference type="PDB" id="5FRI">
    <property type="method" value="X-ray"/>
    <property type="resolution" value="2.00 A"/>
    <property type="chains" value="A=200-498"/>
</dbReference>
<dbReference type="PDB" id="5QIK">
    <property type="method" value="X-ray"/>
    <property type="resolution" value="1.58 A"/>
    <property type="chains" value="A=200-503"/>
</dbReference>
<dbReference type="PDB" id="5QIL">
    <property type="method" value="X-ray"/>
    <property type="resolution" value="1.98 A"/>
    <property type="chains" value="A=200-503"/>
</dbReference>
<dbReference type="PDB" id="5QIM">
    <property type="method" value="X-ray"/>
    <property type="resolution" value="1.75 A"/>
    <property type="chains" value="A=200-503"/>
</dbReference>
<dbReference type="PDB" id="5QTZ">
    <property type="method" value="X-ray"/>
    <property type="resolution" value="1.83 A"/>
    <property type="chains" value="A=200-503"/>
</dbReference>
<dbReference type="PDB" id="5QU0">
    <property type="method" value="X-ray"/>
    <property type="resolution" value="1.67 A"/>
    <property type="chains" value="A=200-503"/>
</dbReference>
<dbReference type="PDB" id="5USQ">
    <property type="method" value="X-ray"/>
    <property type="resolution" value="2.55 A"/>
    <property type="chains" value="A=200-498"/>
</dbReference>
<dbReference type="PDB" id="6B8Y">
    <property type="method" value="X-ray"/>
    <property type="resolution" value="1.65 A"/>
    <property type="chains" value="A=200-503"/>
</dbReference>
<dbReference type="PDB" id="6MAC">
    <property type="method" value="X-ray"/>
    <property type="resolution" value="2.34 A"/>
    <property type="chains" value="K=33-112"/>
</dbReference>
<dbReference type="PDB" id="8YHF">
    <property type="method" value="X-ray"/>
    <property type="resolution" value="1.40 A"/>
    <property type="chains" value="A=162-503"/>
</dbReference>
<dbReference type="PDB" id="8YHL">
    <property type="method" value="X-ray"/>
    <property type="resolution" value="1.47 A"/>
    <property type="chains" value="A=200-503"/>
</dbReference>
<dbReference type="PDB" id="9B9F">
    <property type="method" value="X-ray"/>
    <property type="resolution" value="3.00 A"/>
    <property type="chains" value="C/H=31-115"/>
</dbReference>
<dbReference type="PDB" id="9F6X">
    <property type="method" value="X-ray"/>
    <property type="resolution" value="2.68 A"/>
    <property type="chains" value="A=200-500"/>
</dbReference>
<dbReference type="PDB" id="9FK5">
    <property type="method" value="EM"/>
    <property type="resolution" value="4.10 A"/>
    <property type="chains" value="C=31-115"/>
</dbReference>
<dbReference type="PDBsum" id="1B6C"/>
<dbReference type="PDBsum" id="1IAS"/>
<dbReference type="PDBsum" id="1PY5"/>
<dbReference type="PDBsum" id="1RW8"/>
<dbReference type="PDBsum" id="1VJY"/>
<dbReference type="PDBsum" id="2L5S"/>
<dbReference type="PDBsum" id="2PJY"/>
<dbReference type="PDBsum" id="2WOT"/>
<dbReference type="PDBsum" id="2WOU"/>
<dbReference type="PDBsum" id="2X7O"/>
<dbReference type="PDBsum" id="3FAA"/>
<dbReference type="PDBsum" id="3GXL"/>
<dbReference type="PDBsum" id="3HMM"/>
<dbReference type="PDBsum" id="3KCF"/>
<dbReference type="PDBsum" id="3KFD"/>
<dbReference type="PDBsum" id="3TZM"/>
<dbReference type="PDBsum" id="4X0M"/>
<dbReference type="PDBsum" id="4X2F"/>
<dbReference type="PDBsum" id="4X2G"/>
<dbReference type="PDBsum" id="4X2J"/>
<dbReference type="PDBsum" id="4X2K"/>
<dbReference type="PDBsum" id="4X2N"/>
<dbReference type="PDBsum" id="5E8S"/>
<dbReference type="PDBsum" id="5E8T"/>
<dbReference type="PDBsum" id="5E8U"/>
<dbReference type="PDBsum" id="5E8W"/>
<dbReference type="PDBsum" id="5E8X"/>
<dbReference type="PDBsum" id="5E8Z"/>
<dbReference type="PDBsum" id="5E90"/>
<dbReference type="PDBsum" id="5FRI"/>
<dbReference type="PDBsum" id="5QIK"/>
<dbReference type="PDBsum" id="5QIL"/>
<dbReference type="PDBsum" id="5QIM"/>
<dbReference type="PDBsum" id="5QTZ"/>
<dbReference type="PDBsum" id="5QU0"/>
<dbReference type="PDBsum" id="5USQ"/>
<dbReference type="PDBsum" id="6B8Y"/>
<dbReference type="PDBsum" id="6MAC"/>
<dbReference type="PDBsum" id="8YHF"/>
<dbReference type="PDBsum" id="8YHL"/>
<dbReference type="PDBsum" id="9B9F"/>
<dbReference type="PDBsum" id="9F6X"/>
<dbReference type="PDBsum" id="9FK5"/>
<dbReference type="BMRB" id="P36897"/>
<dbReference type="EMDB" id="EMD-50519"/>
<dbReference type="SMR" id="P36897"/>
<dbReference type="BioGRID" id="112904">
    <property type="interactions" value="265"/>
</dbReference>
<dbReference type="ComplexPortal" id="CPX-2544">
    <property type="entry name" value="TGF-beta-3-TGFR complex"/>
</dbReference>
<dbReference type="ComplexPortal" id="CPX-529">
    <property type="entry name" value="TGF-beta-1-TGFR complex"/>
</dbReference>
<dbReference type="ComplexPortal" id="CPX-834">
    <property type="entry name" value="TGF-beta-2-TGFR complex"/>
</dbReference>
<dbReference type="CORUM" id="P36897"/>
<dbReference type="DIP" id="DIP-5935N"/>
<dbReference type="FunCoup" id="P36897">
    <property type="interactions" value="2168"/>
</dbReference>
<dbReference type="IntAct" id="P36897">
    <property type="interactions" value="52"/>
</dbReference>
<dbReference type="MINT" id="P36897"/>
<dbReference type="STRING" id="9606.ENSP00000447297"/>
<dbReference type="BindingDB" id="P36897"/>
<dbReference type="ChEMBL" id="CHEMBL4439"/>
<dbReference type="DrugBank" id="DB07267">
    <property type="generic name" value="2-(6-methylpyridin-2-yl)-N-pyridin-4-ylquinazolin-4-amine"/>
</dbReference>
<dbReference type="DrugBank" id="DB04480">
    <property type="generic name" value="3-(4-Fluorophenyl)-2-(6-Methylpyridin-2-Yl)-5,6-Dihydro-4h-Pyrrolo[1,2-B]Pyrazole"/>
</dbReference>
<dbReference type="DrugBank" id="DB03921">
    <property type="generic name" value="4-(3-Pyridin-2-Yl-1h-Pyrazol-4-Yl)Quinoline"/>
</dbReference>
<dbReference type="DrugBank" id="DB12010">
    <property type="generic name" value="Fostamatinib"/>
</dbReference>
<dbReference type="DrugBank" id="DB11911">
    <property type="generic name" value="Galunisertib"/>
</dbReference>
<dbReference type="DrugBank" id="DB16064">
    <property type="generic name" value="LY-3200882"/>
</dbReference>
<dbReference type="DrugBank" id="DB08450">
    <property type="generic name" value="N-1H-indazol-5-yl-2-(6-methylpyridin-2-yl)quinazolin-4-amine"/>
</dbReference>
<dbReference type="DrugBank" id="DB07152">
    <property type="generic name" value="N-[4-(5-fluoro-6-methylpyridin-2-yl)-5-quinoxalin-6-yl-1H-imidazol-2-yl]acetamide"/>
</dbReference>
<dbReference type="DrugBank" id="DB04434">
    <property type="generic name" value="Naphthyridine Inhibitor"/>
</dbReference>
<dbReference type="DrugBank" id="DB15310">
    <property type="generic name" value="Vactosertib"/>
</dbReference>
<dbReference type="DrugCentral" id="P36897"/>
<dbReference type="GuidetoPHARMACOLOGY" id="1788"/>
<dbReference type="GlyCosmos" id="P36897">
    <property type="glycosylation" value="1 site, No reported glycans"/>
</dbReference>
<dbReference type="GlyGen" id="P36897">
    <property type="glycosylation" value="3 sites, 1 N-linked glycan (2 sites), 1 O-linked glycan (1 site)"/>
</dbReference>
<dbReference type="iPTMnet" id="P36897"/>
<dbReference type="PhosphoSitePlus" id="P36897"/>
<dbReference type="SwissPalm" id="P36897"/>
<dbReference type="BioMuta" id="TGFBR1"/>
<dbReference type="DMDM" id="547777"/>
<dbReference type="CPTAC" id="CPTAC-3123"/>
<dbReference type="CPTAC" id="CPTAC-3124"/>
<dbReference type="jPOST" id="P36897"/>
<dbReference type="MassIVE" id="P36897"/>
<dbReference type="PaxDb" id="9606-ENSP00000364133"/>
<dbReference type="PeptideAtlas" id="P36897"/>
<dbReference type="ProteomicsDB" id="55234">
    <molecule id="P36897-1"/>
</dbReference>
<dbReference type="ProteomicsDB" id="55235">
    <molecule id="P36897-2"/>
</dbReference>
<dbReference type="ProteomicsDB" id="55236">
    <molecule id="P36897-3"/>
</dbReference>
<dbReference type="Pumba" id="P36897"/>
<dbReference type="Antibodypedia" id="29038">
    <property type="antibodies" value="591 antibodies from 43 providers"/>
</dbReference>
<dbReference type="DNASU" id="7046"/>
<dbReference type="Ensembl" id="ENST00000374990.6">
    <molecule id="P36897-3"/>
    <property type="protein sequence ID" value="ENSP00000364129.2"/>
    <property type="gene ID" value="ENSG00000106799.15"/>
</dbReference>
<dbReference type="Ensembl" id="ENST00000374994.9">
    <molecule id="P36897-1"/>
    <property type="protein sequence ID" value="ENSP00000364133.4"/>
    <property type="gene ID" value="ENSG00000106799.15"/>
</dbReference>
<dbReference type="Ensembl" id="ENST00000552516.5">
    <molecule id="P36897-2"/>
    <property type="protein sequence ID" value="ENSP00000447297.1"/>
    <property type="gene ID" value="ENSG00000106799.15"/>
</dbReference>
<dbReference type="GeneID" id="7046"/>
<dbReference type="KEGG" id="hsa:7046"/>
<dbReference type="MANE-Select" id="ENST00000374994.9">
    <property type="protein sequence ID" value="ENSP00000364133.4"/>
    <property type="RefSeq nucleotide sequence ID" value="NM_004612.4"/>
    <property type="RefSeq protein sequence ID" value="NP_004603.1"/>
</dbReference>
<dbReference type="UCSC" id="uc004azd.4">
    <molecule id="P36897-1"/>
    <property type="organism name" value="human"/>
</dbReference>
<dbReference type="AGR" id="HGNC:11772"/>
<dbReference type="CTD" id="7046"/>
<dbReference type="DisGeNET" id="7046"/>
<dbReference type="GeneCards" id="TGFBR1"/>
<dbReference type="GeneReviews" id="TGFBR1"/>
<dbReference type="HGNC" id="HGNC:11772">
    <property type="gene designation" value="TGFBR1"/>
</dbReference>
<dbReference type="HPA" id="ENSG00000106799">
    <property type="expression patterns" value="Low tissue specificity"/>
</dbReference>
<dbReference type="MalaCards" id="TGFBR1"/>
<dbReference type="MIM" id="132800">
    <property type="type" value="phenotype"/>
</dbReference>
<dbReference type="MIM" id="190181">
    <property type="type" value="gene"/>
</dbReference>
<dbReference type="MIM" id="609192">
    <property type="type" value="phenotype"/>
</dbReference>
<dbReference type="neXtProt" id="NX_P36897"/>
<dbReference type="OpenTargets" id="ENSG00000106799"/>
<dbReference type="Orphanet" id="91387">
    <property type="disease" value="Familial thoracic aortic aneurysm and aortic dissection"/>
</dbReference>
<dbReference type="Orphanet" id="60030">
    <property type="disease" value="Loeys-Dietz syndrome"/>
</dbReference>
<dbReference type="Orphanet" id="284973">
    <property type="disease" value="Marfan syndrome type 2"/>
</dbReference>
<dbReference type="Orphanet" id="65748">
    <property type="disease" value="Multiple self-healing squamous epithelioma"/>
</dbReference>
<dbReference type="PharmGKB" id="PA36485"/>
<dbReference type="VEuPathDB" id="HostDB:ENSG00000106799"/>
<dbReference type="eggNOG" id="KOG2052">
    <property type="taxonomic scope" value="Eukaryota"/>
</dbReference>
<dbReference type="GeneTree" id="ENSGT00940000156394"/>
<dbReference type="HOGENOM" id="CLU_000288_8_1_1"/>
<dbReference type="InParanoid" id="P36897"/>
<dbReference type="OMA" id="VPHCCDR"/>
<dbReference type="OrthoDB" id="69842at2759"/>
<dbReference type="PAN-GO" id="P36897">
    <property type="GO annotations" value="12 GO annotations based on evolutionary models"/>
</dbReference>
<dbReference type="PhylomeDB" id="P36897"/>
<dbReference type="TreeFam" id="TF314724"/>
<dbReference type="BRENDA" id="2.7.10.2">
    <property type="organism ID" value="2681"/>
</dbReference>
<dbReference type="BRENDA" id="2.7.11.30">
    <property type="organism ID" value="2681"/>
</dbReference>
<dbReference type="PathwayCommons" id="P36897"/>
<dbReference type="Reactome" id="R-HSA-2173788">
    <property type="pathway name" value="Downregulation of TGF-beta receptor signaling"/>
</dbReference>
<dbReference type="Reactome" id="R-HSA-2173789">
    <property type="pathway name" value="TGF-beta receptor signaling activates SMADs"/>
</dbReference>
<dbReference type="Reactome" id="R-HSA-2173791">
    <property type="pathway name" value="TGF-beta receptor signaling in EMT (epithelial to mesenchymal transition)"/>
</dbReference>
<dbReference type="Reactome" id="R-HSA-3304356">
    <property type="pathway name" value="SMAD2/3 Phosphorylation Motif Mutants in Cancer"/>
</dbReference>
<dbReference type="Reactome" id="R-HSA-3645790">
    <property type="pathway name" value="TGFBR2 Kinase Domain Mutants in Cancer"/>
</dbReference>
<dbReference type="Reactome" id="R-HSA-3656532">
    <property type="pathway name" value="TGFBR1 KD Mutants in Cancer"/>
</dbReference>
<dbReference type="Reactome" id="R-HSA-3656535">
    <property type="pathway name" value="TGFBR1 LBD Mutants in Cancer"/>
</dbReference>
<dbReference type="Reactome" id="R-HSA-5689603">
    <property type="pathway name" value="UCH proteinases"/>
</dbReference>
<dbReference type="Reactome" id="R-HSA-5689880">
    <property type="pathway name" value="Ub-specific processing proteases"/>
</dbReference>
<dbReference type="Reactome" id="R-HSA-9839389">
    <property type="pathway name" value="TGFBR3 regulates TGF-beta signaling"/>
</dbReference>
<dbReference type="SignaLink" id="P36897"/>
<dbReference type="SIGNOR" id="P36897"/>
<dbReference type="BioGRID-ORCS" id="7046">
    <property type="hits" value="59 hits in 1182 CRISPR screens"/>
</dbReference>
<dbReference type="CD-CODE" id="232F8A39">
    <property type="entry name" value="P-body"/>
</dbReference>
<dbReference type="CD-CODE" id="804901D1">
    <property type="entry name" value="Nuclear speckle"/>
</dbReference>
<dbReference type="CD-CODE" id="DEE660B4">
    <property type="entry name" value="Stress granule"/>
</dbReference>
<dbReference type="ChiTaRS" id="TGFBR1">
    <property type="organism name" value="human"/>
</dbReference>
<dbReference type="EvolutionaryTrace" id="P36897"/>
<dbReference type="GeneWiki" id="TGF_beta_receptor_1"/>
<dbReference type="GenomeRNAi" id="7046"/>
<dbReference type="Pharos" id="P36897">
    <property type="development level" value="Tchem"/>
</dbReference>
<dbReference type="PRO" id="PR:P36897"/>
<dbReference type="Proteomes" id="UP000005640">
    <property type="component" value="Chromosome 9"/>
</dbReference>
<dbReference type="RNAct" id="P36897">
    <property type="molecule type" value="protein"/>
</dbReference>
<dbReference type="Bgee" id="ENSG00000106799">
    <property type="expression patterns" value="Expressed in saphenous vein and 191 other cell types or tissues"/>
</dbReference>
<dbReference type="ExpressionAtlas" id="P36897">
    <property type="expression patterns" value="baseline and differential"/>
</dbReference>
<dbReference type="GO" id="GO:0048179">
    <property type="term" value="C:activin receptor complex"/>
    <property type="evidence" value="ECO:0000318"/>
    <property type="project" value="GO_Central"/>
</dbReference>
<dbReference type="GO" id="GO:0005923">
    <property type="term" value="C:bicellular tight junction"/>
    <property type="evidence" value="ECO:0000314"/>
    <property type="project" value="UniProtKB"/>
</dbReference>
<dbReference type="GO" id="GO:0009986">
    <property type="term" value="C:cell surface"/>
    <property type="evidence" value="ECO:0000314"/>
    <property type="project" value="UniProtKB"/>
</dbReference>
<dbReference type="GO" id="GO:0005929">
    <property type="term" value="C:cilium"/>
    <property type="evidence" value="ECO:0000314"/>
    <property type="project" value="HPA"/>
</dbReference>
<dbReference type="GO" id="GO:0005768">
    <property type="term" value="C:endosome"/>
    <property type="evidence" value="ECO:0000314"/>
    <property type="project" value="UniProtKB"/>
</dbReference>
<dbReference type="GO" id="GO:0016020">
    <property type="term" value="C:membrane"/>
    <property type="evidence" value="ECO:0000250"/>
    <property type="project" value="AgBase"/>
</dbReference>
<dbReference type="GO" id="GO:0045121">
    <property type="term" value="C:membrane raft"/>
    <property type="evidence" value="ECO:0000314"/>
    <property type="project" value="UniProtKB"/>
</dbReference>
<dbReference type="GO" id="GO:0005654">
    <property type="term" value="C:nucleoplasm"/>
    <property type="evidence" value="ECO:0000314"/>
    <property type="project" value="HPA"/>
</dbReference>
<dbReference type="GO" id="GO:0005634">
    <property type="term" value="C:nucleus"/>
    <property type="evidence" value="ECO:0000314"/>
    <property type="project" value="UniProtKB"/>
</dbReference>
<dbReference type="GO" id="GO:0005886">
    <property type="term" value="C:plasma membrane"/>
    <property type="evidence" value="ECO:0000314"/>
    <property type="project" value="HPA"/>
</dbReference>
<dbReference type="GO" id="GO:0043235">
    <property type="term" value="C:receptor complex"/>
    <property type="evidence" value="ECO:0000314"/>
    <property type="project" value="BHF-UCL"/>
</dbReference>
<dbReference type="GO" id="GO:0070021">
    <property type="term" value="C:transforming growth factor beta ligand-receptor complex"/>
    <property type="evidence" value="ECO:0000353"/>
    <property type="project" value="ComplexPortal"/>
</dbReference>
<dbReference type="GO" id="GO:0048185">
    <property type="term" value="F:activin binding"/>
    <property type="evidence" value="ECO:0000318"/>
    <property type="project" value="GO_Central"/>
</dbReference>
<dbReference type="GO" id="GO:0016361">
    <property type="term" value="F:activin receptor activity, type I"/>
    <property type="evidence" value="ECO:0000318"/>
    <property type="project" value="GO_Central"/>
</dbReference>
<dbReference type="GO" id="GO:0005524">
    <property type="term" value="F:ATP binding"/>
    <property type="evidence" value="ECO:0000314"/>
    <property type="project" value="HGNC-UCL"/>
</dbReference>
<dbReference type="GO" id="GO:0070411">
    <property type="term" value="F:I-SMAD binding"/>
    <property type="evidence" value="ECO:0000353"/>
    <property type="project" value="BHF-UCL"/>
</dbReference>
<dbReference type="GO" id="GO:0046872">
    <property type="term" value="F:metal ion binding"/>
    <property type="evidence" value="ECO:0007669"/>
    <property type="project" value="UniProtKB-KW"/>
</dbReference>
<dbReference type="GO" id="GO:0004672">
    <property type="term" value="F:protein kinase activity"/>
    <property type="evidence" value="ECO:0000314"/>
    <property type="project" value="BHF-UCL"/>
</dbReference>
<dbReference type="GO" id="GO:0004674">
    <property type="term" value="F:protein serine/threonine kinase activity"/>
    <property type="evidence" value="ECO:0000314"/>
    <property type="project" value="HGNC-UCL"/>
</dbReference>
<dbReference type="GO" id="GO:0046332">
    <property type="term" value="F:SMAD binding"/>
    <property type="evidence" value="ECO:0000314"/>
    <property type="project" value="HGNC-UCL"/>
</dbReference>
<dbReference type="GO" id="GO:0050431">
    <property type="term" value="F:transforming growth factor beta binding"/>
    <property type="evidence" value="ECO:0000314"/>
    <property type="project" value="HGNC-UCL"/>
</dbReference>
<dbReference type="GO" id="GO:0005024">
    <property type="term" value="F:transforming growth factor beta receptor activity"/>
    <property type="evidence" value="ECO:0000314"/>
    <property type="project" value="BHF-UCL"/>
</dbReference>
<dbReference type="GO" id="GO:0005025">
    <property type="term" value="F:transforming growth factor beta receptor activity, type I"/>
    <property type="evidence" value="ECO:0000314"/>
    <property type="project" value="BHF-UCL"/>
</dbReference>
<dbReference type="GO" id="GO:0004675">
    <property type="term" value="F:transmembrane receptor protein serine/threonine kinase activity"/>
    <property type="evidence" value="ECO:0000314"/>
    <property type="project" value="BHF-UCL"/>
</dbReference>
<dbReference type="GO" id="GO:0005114">
    <property type="term" value="F:type II transforming growth factor beta receptor binding"/>
    <property type="evidence" value="ECO:0000314"/>
    <property type="project" value="BHF-UCL"/>
</dbReference>
<dbReference type="GO" id="GO:0031625">
    <property type="term" value="F:ubiquitin protein ligase binding"/>
    <property type="evidence" value="ECO:0000353"/>
    <property type="project" value="BHF-UCL"/>
</dbReference>
<dbReference type="GO" id="GO:0032924">
    <property type="term" value="P:activin receptor signaling pathway"/>
    <property type="evidence" value="ECO:0000250"/>
    <property type="project" value="AgBase"/>
</dbReference>
<dbReference type="GO" id="GO:0060978">
    <property type="term" value="P:angiogenesis involved in coronary vascular morphogenesis"/>
    <property type="evidence" value="ECO:0000250"/>
    <property type="project" value="BHF-UCL"/>
</dbReference>
<dbReference type="GO" id="GO:0009952">
    <property type="term" value="P:anterior/posterior pattern specification"/>
    <property type="evidence" value="ECO:0000250"/>
    <property type="project" value="BHF-UCL"/>
</dbReference>
<dbReference type="GO" id="GO:0006915">
    <property type="term" value="P:apoptotic process"/>
    <property type="evidence" value="ECO:0007669"/>
    <property type="project" value="UniProtKB-KW"/>
</dbReference>
<dbReference type="GO" id="GO:0048844">
    <property type="term" value="P:artery morphogenesis"/>
    <property type="evidence" value="ECO:0000250"/>
    <property type="project" value="BHF-UCL"/>
</dbReference>
<dbReference type="GO" id="GO:0001824">
    <property type="term" value="P:blastocyst development"/>
    <property type="evidence" value="ECO:0007669"/>
    <property type="project" value="Ensembl"/>
</dbReference>
<dbReference type="GO" id="GO:0060317">
    <property type="term" value="P:cardiac epithelial to mesenchymal transition"/>
    <property type="evidence" value="ECO:0000250"/>
    <property type="project" value="AgBase"/>
</dbReference>
<dbReference type="GO" id="GO:0048870">
    <property type="term" value="P:cell motility"/>
    <property type="evidence" value="ECO:0000315"/>
    <property type="project" value="BHF-UCL"/>
</dbReference>
<dbReference type="GO" id="GO:0071363">
    <property type="term" value="P:cellular response to growth factor stimulus"/>
    <property type="evidence" value="ECO:0000318"/>
    <property type="project" value="GO_Central"/>
</dbReference>
<dbReference type="GO" id="GO:0071560">
    <property type="term" value="P:cellular response to transforming growth factor beta stimulus"/>
    <property type="evidence" value="ECO:0000314"/>
    <property type="project" value="BHF-UCL"/>
</dbReference>
<dbReference type="GO" id="GO:0030199">
    <property type="term" value="P:collagen fibril organization"/>
    <property type="evidence" value="ECO:0000250"/>
    <property type="project" value="BHF-UCL"/>
</dbReference>
<dbReference type="GO" id="GO:0060982">
    <property type="term" value="P:coronary artery morphogenesis"/>
    <property type="evidence" value="ECO:0000250"/>
    <property type="project" value="BHF-UCL"/>
</dbReference>
<dbReference type="GO" id="GO:0048701">
    <property type="term" value="P:embryonic cranial skeleton morphogenesis"/>
    <property type="evidence" value="ECO:0000250"/>
    <property type="project" value="BHF-UCL"/>
</dbReference>
<dbReference type="GO" id="GO:0042118">
    <property type="term" value="P:endothelial cell activation"/>
    <property type="evidence" value="ECO:0000250"/>
    <property type="project" value="AgBase"/>
</dbReference>
<dbReference type="GO" id="GO:0043542">
    <property type="term" value="P:endothelial cell migration"/>
    <property type="evidence" value="ECO:0007669"/>
    <property type="project" value="Ensembl"/>
</dbReference>
<dbReference type="GO" id="GO:1905223">
    <property type="term" value="P:epicardium morphogenesis"/>
    <property type="evidence" value="ECO:0000250"/>
    <property type="project" value="BHF-UCL"/>
</dbReference>
<dbReference type="GO" id="GO:0001837">
    <property type="term" value="P:epithelial to mesenchymal transition"/>
    <property type="evidence" value="ECO:0000314"/>
    <property type="project" value="UniProtKB"/>
</dbReference>
<dbReference type="GO" id="GO:0043062">
    <property type="term" value="P:extracellular structure organization"/>
    <property type="evidence" value="ECO:0000304"/>
    <property type="project" value="UniProtKB"/>
</dbReference>
<dbReference type="GO" id="GO:0046847">
    <property type="term" value="P:filopodium assembly"/>
    <property type="evidence" value="ECO:0007669"/>
    <property type="project" value="Ensembl"/>
</dbReference>
<dbReference type="GO" id="GO:0008354">
    <property type="term" value="P:germ cell migration"/>
    <property type="evidence" value="ECO:0000250"/>
    <property type="project" value="BHF-UCL"/>
</dbReference>
<dbReference type="GO" id="GO:0007507">
    <property type="term" value="P:heart development"/>
    <property type="evidence" value="ECO:0000250"/>
    <property type="project" value="AgBase"/>
</dbReference>
<dbReference type="GO" id="GO:0001701">
    <property type="term" value="P:in utero embryonic development"/>
    <property type="evidence" value="ECO:0000250"/>
    <property type="project" value="BHF-UCL"/>
</dbReference>
<dbReference type="GO" id="GO:0035556">
    <property type="term" value="P:intracellular signal transduction"/>
    <property type="evidence" value="ECO:0000250"/>
    <property type="project" value="AgBase"/>
</dbReference>
<dbReference type="GO" id="GO:0001822">
    <property type="term" value="P:kidney development"/>
    <property type="evidence" value="ECO:0000250"/>
    <property type="project" value="BHF-UCL"/>
</dbReference>
<dbReference type="GO" id="GO:0002088">
    <property type="term" value="P:lens development in camera-type eye"/>
    <property type="evidence" value="ECO:0007669"/>
    <property type="project" value="Ensembl"/>
</dbReference>
<dbReference type="GO" id="GO:0008584">
    <property type="term" value="P:male gonad development"/>
    <property type="evidence" value="ECO:0007669"/>
    <property type="project" value="Ensembl"/>
</dbReference>
<dbReference type="GO" id="GO:0048762">
    <property type="term" value="P:mesenchymal cell differentiation"/>
    <property type="evidence" value="ECO:0000250"/>
    <property type="project" value="AgBase"/>
</dbReference>
<dbReference type="GO" id="GO:0036446">
    <property type="term" value="P:myofibroblast differentiation"/>
    <property type="evidence" value="ECO:0000315"/>
    <property type="project" value="BHF-UCL"/>
</dbReference>
<dbReference type="GO" id="GO:0030336">
    <property type="term" value="P:negative regulation of cell migration"/>
    <property type="evidence" value="ECO:0000315"/>
    <property type="project" value="BHF-UCL"/>
</dbReference>
<dbReference type="GO" id="GO:0032331">
    <property type="term" value="P:negative regulation of chondrocyte differentiation"/>
    <property type="evidence" value="ECO:0000250"/>
    <property type="project" value="BHF-UCL"/>
</dbReference>
<dbReference type="GO" id="GO:0001937">
    <property type="term" value="P:negative regulation of endothelial cell proliferation"/>
    <property type="evidence" value="ECO:0007669"/>
    <property type="project" value="Ensembl"/>
</dbReference>
<dbReference type="GO" id="GO:2001237">
    <property type="term" value="P:negative regulation of extrinsic apoptotic signaling pathway"/>
    <property type="evidence" value="ECO:0000315"/>
    <property type="project" value="BHF-UCL"/>
</dbReference>
<dbReference type="GO" id="GO:0007399">
    <property type="term" value="P:nervous system development"/>
    <property type="evidence" value="ECO:0000318"/>
    <property type="project" value="GO_Central"/>
</dbReference>
<dbReference type="GO" id="GO:0048663">
    <property type="term" value="P:neuron fate commitment"/>
    <property type="evidence" value="ECO:0000250"/>
    <property type="project" value="BHF-UCL"/>
</dbReference>
<dbReference type="GO" id="GO:0060017">
    <property type="term" value="P:parathyroid gland development"/>
    <property type="evidence" value="ECO:0000250"/>
    <property type="project" value="BHF-UCL"/>
</dbReference>
<dbReference type="GO" id="GO:0018105">
    <property type="term" value="P:peptidyl-serine phosphorylation"/>
    <property type="evidence" value="ECO:0000314"/>
    <property type="project" value="UniProtKB"/>
</dbReference>
<dbReference type="GO" id="GO:0060037">
    <property type="term" value="P:pharyngeal system development"/>
    <property type="evidence" value="ECO:0000250"/>
    <property type="project" value="BHF-UCL"/>
</dbReference>
<dbReference type="GO" id="GO:2001235">
    <property type="term" value="P:positive regulation of apoptotic signaling pathway"/>
    <property type="evidence" value="ECO:0000314"/>
    <property type="project" value="UniProtKB"/>
</dbReference>
<dbReference type="GO" id="GO:0030307">
    <property type="term" value="P:positive regulation of cell growth"/>
    <property type="evidence" value="ECO:0000314"/>
    <property type="project" value="BHF-UCL"/>
</dbReference>
<dbReference type="GO" id="GO:0030335">
    <property type="term" value="P:positive regulation of cell migration"/>
    <property type="evidence" value="ECO:0000314"/>
    <property type="project" value="BHF-UCL"/>
</dbReference>
<dbReference type="GO" id="GO:0008284">
    <property type="term" value="P:positive regulation of cell population proliferation"/>
    <property type="evidence" value="ECO:0000315"/>
    <property type="project" value="HGNC-UCL"/>
</dbReference>
<dbReference type="GO" id="GO:0045893">
    <property type="term" value="P:positive regulation of DNA-templated transcription"/>
    <property type="evidence" value="ECO:0000314"/>
    <property type="project" value="BHF-UCL"/>
</dbReference>
<dbReference type="GO" id="GO:0001938">
    <property type="term" value="P:positive regulation of endothelial cell proliferation"/>
    <property type="evidence" value="ECO:0000250"/>
    <property type="project" value="AgBase"/>
</dbReference>
<dbReference type="GO" id="GO:0010718">
    <property type="term" value="P:positive regulation of epithelial to mesenchymal transition"/>
    <property type="evidence" value="ECO:0000250"/>
    <property type="project" value="BHF-UCL"/>
</dbReference>
<dbReference type="GO" id="GO:1905007">
    <property type="term" value="P:positive regulation of epithelial to mesenchymal transition involved in endocardial cushion formation"/>
    <property type="evidence" value="ECO:0000250"/>
    <property type="project" value="BHF-UCL"/>
</dbReference>
<dbReference type="GO" id="GO:1901203">
    <property type="term" value="P:positive regulation of extracellular matrix assembly"/>
    <property type="evidence" value="ECO:0000315"/>
    <property type="project" value="BHF-UCL"/>
</dbReference>
<dbReference type="GO" id="GO:0051491">
    <property type="term" value="P:positive regulation of filopodium assembly"/>
    <property type="evidence" value="ECO:0007669"/>
    <property type="project" value="Ensembl"/>
</dbReference>
<dbReference type="GO" id="GO:0010628">
    <property type="term" value="P:positive regulation of gene expression"/>
    <property type="evidence" value="ECO:0000315"/>
    <property type="project" value="BHF-UCL"/>
</dbReference>
<dbReference type="GO" id="GO:1902462">
    <property type="term" value="P:positive regulation of mesenchymal stem cell proliferation"/>
    <property type="evidence" value="ECO:0000316"/>
    <property type="project" value="BHF-UCL"/>
</dbReference>
<dbReference type="GO" id="GO:0051897">
    <property type="term" value="P:positive regulation of phosphatidylinositol 3-kinase/protein kinase B signal transduction"/>
    <property type="evidence" value="ECO:0000314"/>
    <property type="project" value="BHF-UCL"/>
</dbReference>
<dbReference type="GO" id="GO:0060391">
    <property type="term" value="P:positive regulation of SMAD protein signal transduction"/>
    <property type="evidence" value="ECO:0000314"/>
    <property type="project" value="BHF-UCL"/>
</dbReference>
<dbReference type="GO" id="GO:0051496">
    <property type="term" value="P:positive regulation of stress fiber assembly"/>
    <property type="evidence" value="ECO:0000250"/>
    <property type="project" value="BHF-UCL"/>
</dbReference>
<dbReference type="GO" id="GO:1905075">
    <property type="term" value="P:positive regulation of tight junction disassembly"/>
    <property type="evidence" value="ECO:0000250"/>
    <property type="project" value="BHF-UCL"/>
</dbReference>
<dbReference type="GO" id="GO:1904018">
    <property type="term" value="P:positive regulation of vasculature development"/>
    <property type="evidence" value="ECO:0000315"/>
    <property type="project" value="BHF-UCL"/>
</dbReference>
<dbReference type="GO" id="GO:0009791">
    <property type="term" value="P:post-embryonic development"/>
    <property type="evidence" value="ECO:0007669"/>
    <property type="project" value="Ensembl"/>
</dbReference>
<dbReference type="GO" id="GO:0060043">
    <property type="term" value="P:regulation of cardiac muscle cell proliferation"/>
    <property type="evidence" value="ECO:0000250"/>
    <property type="project" value="BHF-UCL"/>
</dbReference>
<dbReference type="GO" id="GO:0051726">
    <property type="term" value="P:regulation of cell cycle"/>
    <property type="evidence" value="ECO:0000304"/>
    <property type="project" value="UniProtKB"/>
</dbReference>
<dbReference type="GO" id="GO:0006355">
    <property type="term" value="P:regulation of DNA-templated transcription"/>
    <property type="evidence" value="ECO:0000314"/>
    <property type="project" value="HGNC-UCL"/>
</dbReference>
<dbReference type="GO" id="GO:0010717">
    <property type="term" value="P:regulation of epithelial to mesenchymal transition"/>
    <property type="evidence" value="ECO:0000250"/>
    <property type="project" value="AgBase"/>
</dbReference>
<dbReference type="GO" id="GO:0010468">
    <property type="term" value="P:regulation of gene expression"/>
    <property type="evidence" value="ECO:0000250"/>
    <property type="project" value="AgBase"/>
</dbReference>
<dbReference type="GO" id="GO:0031396">
    <property type="term" value="P:regulation of protein ubiquitination"/>
    <property type="evidence" value="ECO:0000314"/>
    <property type="project" value="UniProtKB"/>
</dbReference>
<dbReference type="GO" id="GO:0070723">
    <property type="term" value="P:response to cholesterol"/>
    <property type="evidence" value="ECO:0000314"/>
    <property type="project" value="BHF-UCL"/>
</dbReference>
<dbReference type="GO" id="GO:0060021">
    <property type="term" value="P:roof of mouth development"/>
    <property type="evidence" value="ECO:0000250"/>
    <property type="project" value="BHF-UCL"/>
</dbReference>
<dbReference type="GO" id="GO:0007165">
    <property type="term" value="P:signal transduction"/>
    <property type="evidence" value="ECO:0000314"/>
    <property type="project" value="HGNC-UCL"/>
</dbReference>
<dbReference type="GO" id="GO:0001501">
    <property type="term" value="P:skeletal system development"/>
    <property type="evidence" value="ECO:0000250"/>
    <property type="project" value="BHF-UCL"/>
</dbReference>
<dbReference type="GO" id="GO:0048705">
    <property type="term" value="P:skeletal system morphogenesis"/>
    <property type="evidence" value="ECO:0000250"/>
    <property type="project" value="BHF-UCL"/>
</dbReference>
<dbReference type="GO" id="GO:0048538">
    <property type="term" value="P:thymus development"/>
    <property type="evidence" value="ECO:0000250"/>
    <property type="project" value="BHF-UCL"/>
</dbReference>
<dbReference type="GO" id="GO:0007179">
    <property type="term" value="P:transforming growth factor beta receptor signaling pathway"/>
    <property type="evidence" value="ECO:0000314"/>
    <property type="project" value="BHF-UCL"/>
</dbReference>
<dbReference type="GO" id="GO:0061450">
    <property type="term" value="P:trophoblast cell migration"/>
    <property type="evidence" value="ECO:0000314"/>
    <property type="project" value="UniProt"/>
</dbReference>
<dbReference type="GO" id="GO:0101023">
    <property type="term" value="P:vascular endothelial cell proliferation"/>
    <property type="evidence" value="ECO:0000318"/>
    <property type="project" value="GO_Central"/>
</dbReference>
<dbReference type="GO" id="GO:0003223">
    <property type="term" value="P:ventricular compact myocardium morphogenesis"/>
    <property type="evidence" value="ECO:0000250"/>
    <property type="project" value="BHF-UCL"/>
</dbReference>
<dbReference type="GO" id="GO:0060412">
    <property type="term" value="P:ventricular septum morphogenesis"/>
    <property type="evidence" value="ECO:0000250"/>
    <property type="project" value="BHF-UCL"/>
</dbReference>
<dbReference type="GO" id="GO:0003222">
    <property type="term" value="P:ventricular trabecula myocardium morphogenesis"/>
    <property type="evidence" value="ECO:0000250"/>
    <property type="project" value="BHF-UCL"/>
</dbReference>
<dbReference type="GO" id="GO:0042060">
    <property type="term" value="P:wound healing"/>
    <property type="evidence" value="ECO:0000304"/>
    <property type="project" value="UniProtKB"/>
</dbReference>
<dbReference type="CDD" id="cd14143">
    <property type="entry name" value="STKc_TGFbR1_ACVR1b_ACVR1c"/>
    <property type="match status" value="1"/>
</dbReference>
<dbReference type="CDD" id="cd23537">
    <property type="entry name" value="TFP_LU_ECD_ALK5"/>
    <property type="match status" value="1"/>
</dbReference>
<dbReference type="FunFam" id="1.10.510.10:FF:000045">
    <property type="entry name" value="Receptor protein serine/threonine kinase"/>
    <property type="match status" value="1"/>
</dbReference>
<dbReference type="FunFam" id="2.10.60.10:FF:000005">
    <property type="entry name" value="Receptor protein serine/threonine kinase"/>
    <property type="match status" value="1"/>
</dbReference>
<dbReference type="FunFam" id="3.30.200.20:FF:000023">
    <property type="entry name" value="Receptor protein serine/threonine kinase"/>
    <property type="match status" value="1"/>
</dbReference>
<dbReference type="Gene3D" id="2.10.60.10">
    <property type="entry name" value="CD59"/>
    <property type="match status" value="1"/>
</dbReference>
<dbReference type="Gene3D" id="3.30.200.20">
    <property type="entry name" value="Phosphorylase Kinase, domain 1"/>
    <property type="match status" value="1"/>
</dbReference>
<dbReference type="Gene3D" id="1.10.510.10">
    <property type="entry name" value="Transferase(Phosphotransferase) domain 1"/>
    <property type="match status" value="1"/>
</dbReference>
<dbReference type="IDEAL" id="IID00413"/>
<dbReference type="InterPro" id="IPR000472">
    <property type="entry name" value="Activin_recp"/>
</dbReference>
<dbReference type="InterPro" id="IPR003605">
    <property type="entry name" value="GS_dom"/>
</dbReference>
<dbReference type="InterPro" id="IPR011009">
    <property type="entry name" value="Kinase-like_dom_sf"/>
</dbReference>
<dbReference type="InterPro" id="IPR000719">
    <property type="entry name" value="Prot_kinase_dom"/>
</dbReference>
<dbReference type="InterPro" id="IPR017441">
    <property type="entry name" value="Protein_kinase_ATP_BS"/>
</dbReference>
<dbReference type="InterPro" id="IPR008271">
    <property type="entry name" value="Ser/Thr_kinase_AS"/>
</dbReference>
<dbReference type="InterPro" id="IPR045860">
    <property type="entry name" value="Snake_toxin-like_sf"/>
</dbReference>
<dbReference type="InterPro" id="IPR000333">
    <property type="entry name" value="TGFB_receptor"/>
</dbReference>
<dbReference type="PANTHER" id="PTHR23255:SF61">
    <property type="entry name" value="TGF-BETA RECEPTOR TYPE-1"/>
    <property type="match status" value="1"/>
</dbReference>
<dbReference type="PANTHER" id="PTHR23255">
    <property type="entry name" value="TRANSFORMING GROWTH FACTOR-BETA RECEPTOR TYPE I AND II"/>
    <property type="match status" value="1"/>
</dbReference>
<dbReference type="Pfam" id="PF01064">
    <property type="entry name" value="Activin_recp"/>
    <property type="match status" value="1"/>
</dbReference>
<dbReference type="Pfam" id="PF00069">
    <property type="entry name" value="Pkinase"/>
    <property type="match status" value="1"/>
</dbReference>
<dbReference type="Pfam" id="PF08515">
    <property type="entry name" value="TGF_beta_GS"/>
    <property type="match status" value="1"/>
</dbReference>
<dbReference type="SMART" id="SM00467">
    <property type="entry name" value="GS"/>
    <property type="match status" value="1"/>
</dbReference>
<dbReference type="SMART" id="SM00220">
    <property type="entry name" value="S_TKc"/>
    <property type="match status" value="1"/>
</dbReference>
<dbReference type="SUPFAM" id="SSF56112">
    <property type="entry name" value="Protein kinase-like (PK-like)"/>
    <property type="match status" value="1"/>
</dbReference>
<dbReference type="SUPFAM" id="SSF57302">
    <property type="entry name" value="Snake toxin-like"/>
    <property type="match status" value="1"/>
</dbReference>
<dbReference type="PROSITE" id="PS51256">
    <property type="entry name" value="GS"/>
    <property type="match status" value="1"/>
</dbReference>
<dbReference type="PROSITE" id="PS00107">
    <property type="entry name" value="PROTEIN_KINASE_ATP"/>
    <property type="match status" value="1"/>
</dbReference>
<dbReference type="PROSITE" id="PS50011">
    <property type="entry name" value="PROTEIN_KINASE_DOM"/>
    <property type="match status" value="1"/>
</dbReference>
<dbReference type="PROSITE" id="PS00108">
    <property type="entry name" value="PROTEIN_KINASE_ST"/>
    <property type="match status" value="1"/>
</dbReference>
<comment type="function">
    <text evidence="15 17 23 34 35 36 37 40">Transmembrane serine/threonine kinase forming with the TGF-beta type II serine/threonine kinase receptor, TGFBR2, the non-promiscuous receptor for the TGF-beta cytokines TGFB1, TGFB2 and TGFB3. Transduces the TGFB1, TGFB2 and TGFB3 signal from the cell surface to the cytoplasm and is thus regulating a plethora of physiological and pathological processes including cell cycle arrest in epithelial and hematopoietic cells, control of mesenchymal cell proliferation and differentiation, wound healing, extracellular matrix production, immunosuppression and carcinogenesis (PubMed:33914044). The formation of the receptor complex composed of 2 TGFBR1 and 2 TGFBR2 molecules symmetrically bound to the cytokine dimer results in the phosphorylation and the activation of TGFBR1 by the constitutively active TGFBR2. Activated TGFBR1 phosphorylates SMAD2 which dissociates from the receptor and interacts with SMAD4. The SMAD2-SMAD4 complex is subsequently translocated to the nucleus where it modulates the transcription of the TGF-beta-regulated genes. This constitutes the canonical SMAD-dependent TGF-beta signaling cascade. Also involved in non-canonical, SMAD-independent TGF-beta signaling pathways. For instance, TGFBR1 induces TRAF6 autoubiquitination which in turn results in MAP3K7 ubiquitination and activation to trigger apoptosis. Also regulates epithelial to mesenchymal transition through a SMAD-independent signaling pathway through PARD6A phosphorylation and activation.</text>
</comment>
<comment type="catalytic activity">
    <reaction>
        <text>L-threonyl-[receptor-protein] + ATP = O-phospho-L-threonyl-[receptor-protein] + ADP + H(+)</text>
        <dbReference type="Rhea" id="RHEA:44880"/>
        <dbReference type="Rhea" id="RHEA-COMP:11024"/>
        <dbReference type="Rhea" id="RHEA-COMP:11025"/>
        <dbReference type="ChEBI" id="CHEBI:15378"/>
        <dbReference type="ChEBI" id="CHEBI:30013"/>
        <dbReference type="ChEBI" id="CHEBI:30616"/>
        <dbReference type="ChEBI" id="CHEBI:61977"/>
        <dbReference type="ChEBI" id="CHEBI:456216"/>
        <dbReference type="EC" id="2.7.11.30"/>
    </reaction>
</comment>
<comment type="catalytic activity">
    <reaction>
        <text>L-seryl-[receptor-protein] + ATP = O-phospho-L-seryl-[receptor-protein] + ADP + H(+)</text>
        <dbReference type="Rhea" id="RHEA:18673"/>
        <dbReference type="Rhea" id="RHEA-COMP:11022"/>
        <dbReference type="Rhea" id="RHEA-COMP:11023"/>
        <dbReference type="ChEBI" id="CHEBI:15378"/>
        <dbReference type="ChEBI" id="CHEBI:29999"/>
        <dbReference type="ChEBI" id="CHEBI:30616"/>
        <dbReference type="ChEBI" id="CHEBI:83421"/>
        <dbReference type="ChEBI" id="CHEBI:456216"/>
        <dbReference type="EC" id="2.7.11.30"/>
    </reaction>
</comment>
<comment type="cofactor">
    <cofactor evidence="1">
        <name>Mg(2+)</name>
        <dbReference type="ChEBI" id="CHEBI:18420"/>
    </cofactor>
    <cofactor evidence="1">
        <name>Mn(2+)</name>
        <dbReference type="ChEBI" id="CHEBI:29035"/>
    </cofactor>
</comment>
<comment type="activity regulation">
    <text evidence="38">Kept in an inactive conformation by FKBP1A preventing receptor activation in absence of ligand. CD109 is another inhibitor of the receptor.</text>
</comment>
<comment type="subunit">
    <text evidence="6 7 8 9 10 11 12 13 15 17 20 22 23 26 28 31 32 33 35 37 38 39 40 43">Homodimer; in the endoplasmic reticulum but also at the cell membrane. Heterohexamer; TGFB1, TGFB2 and TGFB3 homodimeric ligands assemble a functional receptor composed of two TGFBR1 and TGFBR2 heterodimers to form a ligand-receptor heterohexamer. The respective affinity of TGBRB1 and TGFBR2 for the ligands may modulate the kinetics of assembly of the receptor and may explain the different biological activities of TGFB1, TGFB2 and TGFB3. Component of a complex composed of TSC22D1 (via N-terminus), TGFBR1 and TGFBR2; the interaction between TSC22D1 and TGFBR1 is inhibited by SMAD7 and promoted by TGFB1 (PubMed:21791611). Interacts with CD109; inhibits TGF-beta receptor activation in keratinocytes. Interacts with RBPMS. Interacts (unphosphorylated) with FKBP1A; prevents TGFBR1 phosphorylation by TGFBR2 and stabilizes it in the inactive conformation. Interacts with SMAD2, SMAD3 and ZFYVE9; ZFYVE9 recruits SMAD2 and SMAD3 to the TGF-beta receptor. Interacts with TRAF6 and MAP3K7; induces MAP3K7 activation by TRAF6. Interacts with PARD6A; involved in TGF-beta induced epithelial to mesenchymal transition. Interacts with NEDD4L (PubMed:15496141). Interacts with SMAD7, SMURF1 and SMURF2; SMAD7 recruits NEDD4L, SMURF1 and SMURF2 to the TGF-beta receptor (PubMed:11163210, PubMed:11278251). Interacts with USP15 and VPS39. Interacts with SDCBP (via C-terminus) (PubMed:25893292). Interacts with CAV1 and this interaction is impaired in the presence of SDCBP (PubMed:25893292). Interacts with APPL1; interaction is TGF beta dependent; mediates trafficking of the TGFBR1 from the endosomes to the nucleus via microtubules in a TRAF6-dependent manner (PubMed:26583432). Interacts with GPR50; this interaction promotes the constitutive activation of SMAD signaling pathway (PubMed:29572483).</text>
</comment>
<comment type="interaction">
    <interactant intactId="EBI-1027557">
        <id>P36897</id>
    </interactant>
    <interactant intactId="EBI-1027571">
        <id>P62942</id>
        <label>FKBP1A</label>
    </interactant>
    <organismsDiffer>false</organismsDiffer>
    <experiments>2</experiments>
</comment>
<comment type="interaction">
    <interactant intactId="EBI-1027557">
        <id>P36897</id>
    </interactant>
    <interactant intactId="EBI-779636">
        <id>P01137</id>
        <label>TGFB1</label>
    </interactant>
    <organismsDiffer>false</organismsDiffer>
    <experiments>2</experiments>
</comment>
<comment type="interaction">
    <interactant intactId="EBI-1027557">
        <id>P36897</id>
    </interactant>
    <interactant intactId="EBI-347088">
        <id>P63104</id>
        <label>YWHAZ</label>
    </interactant>
    <organismsDiffer>false</organismsDiffer>
    <experiments>4</experiments>
</comment>
<comment type="interaction">
    <interactant intactId="EBI-1027557">
        <id>P36897</id>
    </interactant>
    <interactant intactId="EBI-6858501">
        <id>PRO_0000045599</id>
        <dbReference type="UniProtKB" id="Q99IB8"/>
    </interactant>
    <organismsDiffer>true</organismsDiffer>
    <experiments>5</experiments>
</comment>
<comment type="interaction">
    <interactant intactId="EBI-16065417">
        <id>P36897-1</id>
    </interactant>
    <interactant intactId="EBI-9083443">
        <id>P02750</id>
        <label>LRG1</label>
    </interactant>
    <organismsDiffer>false</organismsDiffer>
    <experiments>6</experiments>
</comment>
<comment type="subcellular location">
    <subcellularLocation>
        <location evidence="28 31 41">Cell membrane</location>
        <topology evidence="41">Single-pass type I membrane protein</topology>
    </subcellularLocation>
    <subcellularLocation>
        <location evidence="15">Cell junction</location>
        <location evidence="15">Tight junction</location>
    </subcellularLocation>
    <subcellularLocation>
        <location evidence="31">Cell surface</location>
    </subcellularLocation>
    <subcellularLocation>
        <location evidence="31">Membrane raft</location>
    </subcellularLocation>
</comment>
<comment type="alternative products">
    <event type="alternative splicing"/>
    <isoform>
        <id>P36897-1</id>
        <name>1</name>
        <sequence type="displayed"/>
    </isoform>
    <isoform>
        <id>P36897-2</id>
        <name>2</name>
        <name>B</name>
        <sequence type="described" ref="VSP_041326"/>
    </isoform>
    <isoform>
        <id>P36897-3</id>
        <name>3</name>
        <sequence type="described" ref="VSP_041327"/>
    </isoform>
</comment>
<comment type="tissue specificity">
    <text evidence="31">Found in all tissues examined, most abundant in placenta and least abundant in brain and heart. Expressed in a variety of cancer cell lines (PubMed:25893292).</text>
</comment>
<comment type="PTM">
    <text evidence="9 35">Phosphorylated at basal levels in the absence of ligand. Activated upon phosphorylation by TGFBR2, mainly in the GS domain. Phosphorylation in the GS domain abrogates FKBP1A-binding.</text>
</comment>
<comment type="PTM">
    <text evidence="42">N-Glycosylated.</text>
</comment>
<comment type="PTM">
    <text evidence="13 30 31 34">Ubiquitinated; undergoes ubiquitination catalyzed by several E3 ubiquitin ligases including SMURF1, SMURF2 and NEDD4L2. Results in the proteasomal and/or lysosomal degradation of the receptor thereby negatively regulating its activity. Deubiquitinated by USP15, leading to stabilization of the protein and enhanced TGF-beta signal. Its ubiquitination and proteasome-mediated degradation is negatively regulated by SDCBP (PubMed:25893292). Ubiquitinated by BFAR via'Lys-63'-linked ubiquitination at Lys-268, leading to TGF-beta signaling activation (PubMed:33914044).</text>
</comment>
<comment type="disease" evidence="14 16 18 19 25 29">
    <disease id="DI-00675">
        <name>Loeys-Dietz syndrome 1</name>
        <acronym>LDS1</acronym>
        <description>An aortic aneurysm syndrome with widespread systemic involvement, characterized by arterial tortuosity and aneurysms, hypertelorism, and bifid uvula or cleft palate. Physical findings include prominent joint laxity, easy bruising, wide and atrophic scars, velvety and translucent skin with easily visible veins, spontaneous rupture of the spleen or bowel, and catastrophic complications of pregnancy, including rupture of the gravid uterus and the arteries, either during pregnancy or in the immediate postpartum period. Some patients have craniosynostosis, exotropy, micrognathia and retrognathia, structural brain abnormalities, and intellectual deficit.</description>
        <dbReference type="MIM" id="609192"/>
    </disease>
    <text evidence="18">The disease is caused by variants affecting the gene represented in this entry. TGFBR1 mutation Gln-487 has been reported to be associated with thoracic aortic aneurysms and dissection (TAAD) (PubMed:16791849). This phenotype, also known as thoracic aortic aneurysms type 5 (AAT5), is distinguised from LDS1 by having aneurysms restricted to thoracic aorta. It is unclear, however, if this condition is fulfilled in individuals bearing Gln-487 mutation, that is why they are considered as LDS1 by the OMIM resource.</text>
</comment>
<comment type="disease" evidence="27">
    <disease id="DI-03159">
        <name>Multiple self-healing squamous epithelioma</name>
        <acronym>MSSE</acronym>
        <description>A disorder characterized by multiple skin tumors that undergo spontaneous regression. Tumors appear most often on sun-exposed regions, are locally invasive, and undergo spontaneous resolution over a period of months leaving pitted scars.</description>
        <dbReference type="MIM" id="132800"/>
    </disease>
    <text>The disease is caused by variants affecting the gene represented in this entry.</text>
</comment>
<comment type="similarity">
    <text evidence="46">Belongs to the protein kinase superfamily. TKL Ser/Thr protein kinase family. TGFB receptor subfamily.</text>
</comment>
<accession>P36897</accession>
<accession>Q6IR47</accession>
<accession>Q706C0</accession>
<accession>Q706C1</accession>